<gene>
    <name evidence="25" type="primary">CAD</name>
</gene>
<organism>
    <name type="scientific">Homo sapiens</name>
    <name type="common">Human</name>
    <dbReference type="NCBI Taxonomy" id="9606"/>
    <lineage>
        <taxon>Eukaryota</taxon>
        <taxon>Metazoa</taxon>
        <taxon>Chordata</taxon>
        <taxon>Craniata</taxon>
        <taxon>Vertebrata</taxon>
        <taxon>Euteleostomi</taxon>
        <taxon>Mammalia</taxon>
        <taxon>Eutheria</taxon>
        <taxon>Euarchontoglires</taxon>
        <taxon>Primates</taxon>
        <taxon>Haplorrhini</taxon>
        <taxon>Catarrhini</taxon>
        <taxon>Hominidae</taxon>
        <taxon>Homo</taxon>
    </lineage>
</organism>
<name>PYR1_HUMAN</name>
<accession>P27708</accession>
<accession>D6W552</accession>
<accession>Q6P0Q0</accession>
<accession>Q96CK3</accession>
<comment type="function">
    <text evidence="18">Multifunctional protein that encodes the first 3 enzymatic activities of the de novo pyrimidine pathway: carbamoylphosphate synthetase (CPSase; EC 6.3.5.5), aspartate transcarbamylase (ATCase; EC 2.1.3.2) and dihydroorotase (DHOase; EC 3.5.2.3). The CPSase-function is accomplished in 2 steps, by a glutamine-dependent amidotransferase activity (GATase) that binds and cleaves glutamine to produce ammonia, followed by an ammonium-dependent carbamoyl phosphate synthetase, which reacts with the ammonia, hydrogencarbonate and ATP to form carbamoyl phosphate. The endogenously produced carbamoyl phosphate is sequestered and channeled to the ATCase active site. ATCase then catalyzes the formation of carbamoyl-L-aspartate from L-aspartate and carbamoyl phosphate. In the last step, DHOase catalyzes the cyclization of carbamoyl aspartate to dihydroorotate.</text>
</comment>
<comment type="catalytic activity">
    <reaction evidence="18">
        <text>hydrogencarbonate + L-glutamine + 2 ATP + H2O = carbamoyl phosphate + L-glutamate + 2 ADP + phosphate + 2 H(+)</text>
        <dbReference type="Rhea" id="RHEA:18633"/>
        <dbReference type="ChEBI" id="CHEBI:15377"/>
        <dbReference type="ChEBI" id="CHEBI:15378"/>
        <dbReference type="ChEBI" id="CHEBI:17544"/>
        <dbReference type="ChEBI" id="CHEBI:29985"/>
        <dbReference type="ChEBI" id="CHEBI:30616"/>
        <dbReference type="ChEBI" id="CHEBI:43474"/>
        <dbReference type="ChEBI" id="CHEBI:58228"/>
        <dbReference type="ChEBI" id="CHEBI:58359"/>
        <dbReference type="ChEBI" id="CHEBI:456216"/>
        <dbReference type="EC" id="6.3.5.5"/>
    </reaction>
</comment>
<comment type="catalytic activity">
    <reaction evidence="3">
        <text>L-glutamine + H2O = L-glutamate + NH4(+)</text>
        <dbReference type="Rhea" id="RHEA:15889"/>
        <dbReference type="ChEBI" id="CHEBI:15377"/>
        <dbReference type="ChEBI" id="CHEBI:28938"/>
        <dbReference type="ChEBI" id="CHEBI:29985"/>
        <dbReference type="ChEBI" id="CHEBI:58359"/>
        <dbReference type="EC" id="3.5.1.2"/>
    </reaction>
</comment>
<comment type="catalytic activity">
    <reaction evidence="3">
        <text>hydrogencarbonate + NH4(+) + 2 ATP = carbamoyl phosphate + 2 ADP + phosphate + 2 H(+)</text>
        <dbReference type="Rhea" id="RHEA:18029"/>
        <dbReference type="ChEBI" id="CHEBI:15378"/>
        <dbReference type="ChEBI" id="CHEBI:17544"/>
        <dbReference type="ChEBI" id="CHEBI:28938"/>
        <dbReference type="ChEBI" id="CHEBI:30616"/>
        <dbReference type="ChEBI" id="CHEBI:43474"/>
        <dbReference type="ChEBI" id="CHEBI:58228"/>
        <dbReference type="ChEBI" id="CHEBI:456216"/>
        <dbReference type="EC" id="6.3.4.16"/>
    </reaction>
</comment>
<comment type="catalytic activity">
    <reaction evidence="18">
        <text>carbamoyl phosphate + L-aspartate = N-carbamoyl-L-aspartate + phosphate + H(+)</text>
        <dbReference type="Rhea" id="RHEA:20013"/>
        <dbReference type="ChEBI" id="CHEBI:15378"/>
        <dbReference type="ChEBI" id="CHEBI:29991"/>
        <dbReference type="ChEBI" id="CHEBI:32814"/>
        <dbReference type="ChEBI" id="CHEBI:43474"/>
        <dbReference type="ChEBI" id="CHEBI:58228"/>
        <dbReference type="EC" id="2.1.3.2"/>
    </reaction>
</comment>
<comment type="catalytic activity">
    <reaction evidence="18">
        <text>(S)-dihydroorotate + H2O = N-carbamoyl-L-aspartate + H(+)</text>
        <dbReference type="Rhea" id="RHEA:24296"/>
        <dbReference type="ChEBI" id="CHEBI:15377"/>
        <dbReference type="ChEBI" id="CHEBI:15378"/>
        <dbReference type="ChEBI" id="CHEBI:30864"/>
        <dbReference type="ChEBI" id="CHEBI:32814"/>
        <dbReference type="EC" id="3.5.2.3"/>
    </reaction>
</comment>
<comment type="cofactor">
    <cofactor evidence="18 22">
        <name>Zn(2+)</name>
        <dbReference type="ChEBI" id="CHEBI:29105"/>
    </cofactor>
    <text evidence="18 22">Binds 3 Zn(2+) ions per subunit (for dihydroorotase activity).</text>
</comment>
<comment type="cofactor">
    <cofactor evidence="7">
        <name>Mg(2+)</name>
        <dbReference type="ChEBI" id="CHEBI:18420"/>
    </cofactor>
    <cofactor evidence="7">
        <name>Mn(2+)</name>
        <dbReference type="ChEBI" id="CHEBI:29035"/>
    </cofactor>
    <text evidence="7">Binds 4 magnesium or manganese ions per subunit.</text>
</comment>
<comment type="activity regulation">
    <text evidence="11">Allosterically regulated and controlled by phosphorylation. 5-phosphoribose 1-diphosphate (PRPP) is an activator while UMP and UTP are inhibitors of the CPSase reaction.</text>
</comment>
<comment type="biophysicochemical properties">
    <kinetics>
        <KM evidence="18">28 uM for dihydroorotate</KM>
        <KM evidence="18">241 uM for N-carbamoyl-L-aspartate</KM>
    </kinetics>
</comment>
<comment type="pathway">
    <text evidence="18">Pyrimidine metabolism; UMP biosynthesis via de novo pathway; (S)-dihydroorotate from bicarbonate: step 1/3.</text>
</comment>
<comment type="pathway">
    <text evidence="18">Pyrimidine metabolism; UMP biosynthesis via de novo pathway; (S)-dihydroorotate from bicarbonate: step 2/3.</text>
</comment>
<comment type="pathway">
    <text evidence="18">Pyrimidine metabolism; UMP biosynthesis via de novo pathway; (S)-dihydroorotate from bicarbonate: step 3/3.</text>
</comment>
<comment type="subunit">
    <text evidence="18 20">Homohexamer (PubMed:24332717). Interacts with CIPC (PubMed:26657846).</text>
</comment>
<comment type="interaction">
    <interactant intactId="EBI-355504">
        <id>P27708</id>
    </interactant>
    <interactant intactId="EBI-355504">
        <id>P27708</id>
        <label>CAD</label>
    </interactant>
    <organismsDiffer>false</organismsDiffer>
    <experiments>3</experiments>
</comment>
<comment type="interaction">
    <interactant intactId="EBI-355504">
        <id>P27708</id>
    </interactant>
    <interactant intactId="EBI-947360">
        <id>Q8N137</id>
        <label>CNTROB</label>
    </interactant>
    <organismsDiffer>false</organismsDiffer>
    <experiments>2</experiments>
</comment>
<comment type="interaction">
    <interactant intactId="EBI-355504">
        <id>P27708</id>
    </interactant>
    <interactant intactId="EBI-347088">
        <id>P63104</id>
        <label>YWHAZ</label>
    </interactant>
    <organismsDiffer>false</organismsDiffer>
    <experiments>2</experiments>
</comment>
<comment type="subcellular location">
    <subcellularLocation>
        <location evidence="12">Cytoplasm</location>
    </subcellularLocation>
    <subcellularLocation>
        <location evidence="12">Nucleus</location>
    </subcellularLocation>
    <text>Cytosolic and unphosphorylated in resting cells, translocates to the nucleus in response to EGF stimulation, nuclear import promotes optimal cell growth.</text>
</comment>
<comment type="induction">
    <text evidence="13">Transcriptionally repressed following hypoxia by HIF1A.</text>
</comment>
<comment type="PTM">
    <text evidence="15 16 17">Activated by MAP kinase (Erk1/2) phosphorylation just prior to the S phase of the cell cycle, when the demand for pyrimidine nucleotides is greatest, and down-regulated as the cells emerge from S phase by protein kinase A (PKA) phosphorylation. Phosphorylation at Ser-1859 by RPS6KB1 downstream of MTOR promotes oligomerization and stimulates dihydroorotase activity. Phosphorylation at Ser-1406 reduces sensitivity to feedback inhibition by UTP.</text>
</comment>
<comment type="disease" evidence="19 21">
    <disease id="DI-04479">
        <name>Developmental and epileptic encephalopathy 50</name>
        <acronym>DEE50</acronym>
        <description>A form of epileptic encephalopathy, a heterogeneous group of severe early-onset epilepsies characterized by refractory seizures, neurodevelopmental impairment, and poor prognosis. Development is normal prior to seizure onset, after which cognitive and motor delays become apparent. DEE50 is an autosomal recessive, progressive disease with onset in infancy and favorable response to treatment with oral uridine.</description>
        <dbReference type="MIM" id="616457"/>
    </disease>
    <text>The disease is caused by variants affecting the gene represented in this entry.</text>
</comment>
<comment type="miscellaneous">
    <text evidence="3">GATase (glutamine amidotransferase) and CPSase (carbamoyl phosphate synthase) form together the glutamine-dependent CPSase (GD-CPSase) (EC 6.3.5.5).</text>
</comment>
<comment type="similarity">
    <text evidence="24">In the N-terminal section; belongs to the CarA family.</text>
</comment>
<comment type="similarity">
    <text evidence="24">In the 2nd section; belongs to the CarB family.</text>
</comment>
<comment type="similarity">
    <text evidence="24">In the 3rd section; belongs to the metallo-dependent hydrolases superfamily. DHOase family. CAD subfamily.</text>
</comment>
<comment type="similarity">
    <text evidence="24">In the C-terminal section; belongs to the aspartate/ornithine carbamoyltransferase superfamily. ATCase family.</text>
</comment>
<comment type="online information" name="Wikipedia">
    <link uri="https://en.wikipedia.org/wiki/Aspartate_carbamoyltransferase"/>
    <text>Aspartate carbamoyltransferase entry</text>
</comment>
<feature type="initiator methionine" description="Removed" evidence="23 36 40 41">
    <location>
        <position position="1"/>
    </location>
</feature>
<feature type="chain" id="PRO_0000199506" description="Multifunctional protein CAD">
    <location>
        <begin position="2"/>
        <end position="2225"/>
    </location>
</feature>
<feature type="domain" description="Glutamine amidotransferase type-1" evidence="8">
    <location>
        <begin position="177"/>
        <end position="363"/>
    </location>
</feature>
<feature type="domain" description="ATP-grasp 1" evidence="7">
    <location>
        <begin position="519"/>
        <end position="711"/>
    </location>
</feature>
<feature type="domain" description="ATP-grasp 2" evidence="7">
    <location>
        <begin position="1052"/>
        <end position="1243"/>
    </location>
</feature>
<feature type="domain" description="MGS-like" evidence="9">
    <location>
        <begin position="1308"/>
        <end position="1462"/>
    </location>
</feature>
<feature type="region of interest" description="GATase (Glutamine amidotransferase)" evidence="4">
    <location>
        <begin position="2"/>
        <end position="365"/>
    </location>
</feature>
<feature type="region of interest" description="Linker" evidence="4">
    <location>
        <begin position="366"/>
        <end position="394"/>
    </location>
</feature>
<feature type="region of interest" description="CPSase (Carbamoyl phosphate synthase)" evidence="4">
    <location>
        <begin position="395"/>
        <end position="1455"/>
    </location>
</feature>
<feature type="region of interest" description="CPSase A" evidence="4">
    <location>
        <begin position="395"/>
        <end position="933"/>
    </location>
</feature>
<feature type="region of interest" description="CPSase B" evidence="4">
    <location>
        <begin position="934"/>
        <end position="1455"/>
    </location>
</feature>
<feature type="region of interest" description="DHOase (dihydroorotase)" evidence="4">
    <location>
        <begin position="1456"/>
        <end position="1788"/>
    </location>
</feature>
<feature type="region of interest" description="Linker" evidence="4">
    <location>
        <begin position="1789"/>
        <end position="1917"/>
    </location>
</feature>
<feature type="region of interest" description="Disordered" evidence="10">
    <location>
        <begin position="1811"/>
        <end position="1899"/>
    </location>
</feature>
<feature type="region of interest" description="ATCase (Aspartate transcarbamylase)" evidence="4">
    <location>
        <begin position="1918"/>
        <end position="2225"/>
    </location>
</feature>
<feature type="compositionally biased region" description="Polar residues" evidence="10">
    <location>
        <begin position="1825"/>
        <end position="1834"/>
    </location>
</feature>
<feature type="compositionally biased region" description="Basic and acidic residues" evidence="10">
    <location>
        <begin position="1866"/>
        <end position="1878"/>
    </location>
</feature>
<feature type="active site" description="Nucleophile; for GATase activity" evidence="8">
    <location>
        <position position="252"/>
    </location>
</feature>
<feature type="active site" description="For GATase activity" evidence="8">
    <location>
        <position position="336"/>
    </location>
</feature>
<feature type="active site" description="For GATase activity" evidence="8">
    <location>
        <position position="338"/>
    </location>
</feature>
<feature type="active site" description="For DHOase activity" evidence="2">
    <location>
        <position position="1686"/>
    </location>
</feature>
<feature type="binding site" evidence="5">
    <location>
        <position position="44"/>
    </location>
    <ligand>
        <name>L-glutamine</name>
        <dbReference type="ChEBI" id="CHEBI:58359"/>
    </ligand>
</feature>
<feature type="binding site" evidence="5">
    <location>
        <position position="222"/>
    </location>
    <ligand>
        <name>L-glutamine</name>
        <dbReference type="ChEBI" id="CHEBI:58359"/>
    </ligand>
</feature>
<feature type="binding site" evidence="5">
    <location>
        <position position="224"/>
    </location>
    <ligand>
        <name>L-glutamine</name>
        <dbReference type="ChEBI" id="CHEBI:58359"/>
    </ligand>
</feature>
<feature type="binding site" evidence="5">
    <location>
        <position position="253"/>
    </location>
    <ligand>
        <name>L-glutamine</name>
        <dbReference type="ChEBI" id="CHEBI:58359"/>
    </ligand>
</feature>
<feature type="binding site" evidence="5">
    <location>
        <position position="256"/>
    </location>
    <ligand>
        <name>L-glutamine</name>
        <dbReference type="ChEBI" id="CHEBI:58359"/>
    </ligand>
</feature>
<feature type="binding site" evidence="5">
    <location>
        <position position="294"/>
    </location>
    <ligand>
        <name>L-glutamine</name>
        <dbReference type="ChEBI" id="CHEBI:58359"/>
    </ligand>
</feature>
<feature type="binding site" evidence="5">
    <location>
        <position position="296"/>
    </location>
    <ligand>
        <name>L-glutamine</name>
        <dbReference type="ChEBI" id="CHEBI:58359"/>
    </ligand>
</feature>
<feature type="binding site" evidence="5">
    <location>
        <position position="297"/>
    </location>
    <ligand>
        <name>L-glutamine</name>
        <dbReference type="ChEBI" id="CHEBI:58359"/>
    </ligand>
</feature>
<feature type="binding site" evidence="1">
    <location>
        <position position="515"/>
    </location>
    <ligand>
        <name>ATP</name>
        <dbReference type="ChEBI" id="CHEBI:30616"/>
        <label>1</label>
    </ligand>
</feature>
<feature type="binding site" evidence="1">
    <location>
        <position position="555"/>
    </location>
    <ligand>
        <name>ATP</name>
        <dbReference type="ChEBI" id="CHEBI:30616"/>
        <label>1</label>
    </ligand>
</feature>
<feature type="binding site" evidence="1">
    <location>
        <position position="561"/>
    </location>
    <ligand>
        <name>ATP</name>
        <dbReference type="ChEBI" id="CHEBI:30616"/>
        <label>1</label>
    </ligand>
</feature>
<feature type="binding site" evidence="1">
    <location>
        <position position="562"/>
    </location>
    <ligand>
        <name>ATP</name>
        <dbReference type="ChEBI" id="CHEBI:30616"/>
        <label>1</label>
    </ligand>
</feature>
<feature type="binding site" evidence="1">
    <location>
        <position position="592"/>
    </location>
    <ligand>
        <name>ATP</name>
        <dbReference type="ChEBI" id="CHEBI:30616"/>
        <label>1</label>
    </ligand>
</feature>
<feature type="binding site" evidence="1">
    <location>
        <position position="599"/>
    </location>
    <ligand>
        <name>ATP</name>
        <dbReference type="ChEBI" id="CHEBI:30616"/>
        <label>1</label>
    </ligand>
</feature>
<feature type="binding site" evidence="1">
    <location>
        <position position="625"/>
    </location>
    <ligand>
        <name>ATP</name>
        <dbReference type="ChEBI" id="CHEBI:30616"/>
        <label>1</label>
    </ligand>
</feature>
<feature type="binding site" evidence="1">
    <location>
        <position position="626"/>
    </location>
    <ligand>
        <name>ATP</name>
        <dbReference type="ChEBI" id="CHEBI:30616"/>
        <label>1</label>
    </ligand>
</feature>
<feature type="binding site" evidence="1">
    <location>
        <position position="627"/>
    </location>
    <ligand>
        <name>ATP</name>
        <dbReference type="ChEBI" id="CHEBI:30616"/>
        <label>1</label>
    </ligand>
</feature>
<feature type="binding site" evidence="1">
    <location>
        <position position="668"/>
    </location>
    <ligand>
        <name>ATP</name>
        <dbReference type="ChEBI" id="CHEBI:30616"/>
        <label>1</label>
    </ligand>
</feature>
<feature type="binding site" evidence="7">
    <location>
        <position position="668"/>
    </location>
    <ligand>
        <name>Mg(2+)</name>
        <dbReference type="ChEBI" id="CHEBI:18420"/>
        <label>1</label>
    </ligand>
</feature>
<feature type="binding site" evidence="7">
    <location>
        <position position="668"/>
    </location>
    <ligand>
        <name>Mn(2+)</name>
        <dbReference type="ChEBI" id="CHEBI:29035"/>
        <label>1</label>
    </ligand>
</feature>
<feature type="binding site" evidence="1">
    <location>
        <position position="682"/>
    </location>
    <ligand>
        <name>ATP</name>
        <dbReference type="ChEBI" id="CHEBI:30616"/>
        <label>1</label>
    </ligand>
</feature>
<feature type="binding site" evidence="7">
    <location>
        <position position="682"/>
    </location>
    <ligand>
        <name>Mg(2+)</name>
        <dbReference type="ChEBI" id="CHEBI:18420"/>
        <label>1</label>
    </ligand>
</feature>
<feature type="binding site" evidence="7">
    <location>
        <position position="682"/>
    </location>
    <ligand>
        <name>Mg(2+)</name>
        <dbReference type="ChEBI" id="CHEBI:18420"/>
        <label>2</label>
    </ligand>
</feature>
<feature type="binding site" evidence="7">
    <location>
        <position position="682"/>
    </location>
    <ligand>
        <name>Mn(2+)</name>
        <dbReference type="ChEBI" id="CHEBI:29035"/>
        <label>1</label>
    </ligand>
</feature>
<feature type="binding site" evidence="7">
    <location>
        <position position="682"/>
    </location>
    <ligand>
        <name>Mn(2+)</name>
        <dbReference type="ChEBI" id="CHEBI:29035"/>
        <label>2</label>
    </ligand>
</feature>
<feature type="binding site" evidence="7">
    <location>
        <position position="684"/>
    </location>
    <ligand>
        <name>Mg(2+)</name>
        <dbReference type="ChEBI" id="CHEBI:18420"/>
        <label>2</label>
    </ligand>
</feature>
<feature type="binding site" evidence="7">
    <location>
        <position position="684"/>
    </location>
    <ligand>
        <name>Mn(2+)</name>
        <dbReference type="ChEBI" id="CHEBI:29035"/>
        <label>2</label>
    </ligand>
</feature>
<feature type="binding site" evidence="1">
    <location>
        <position position="1088"/>
    </location>
    <ligand>
        <name>ATP</name>
        <dbReference type="ChEBI" id="CHEBI:30616"/>
        <label>2</label>
    </ligand>
</feature>
<feature type="binding site" evidence="1">
    <location>
        <position position="1127"/>
    </location>
    <ligand>
        <name>ATP</name>
        <dbReference type="ChEBI" id="CHEBI:30616"/>
        <label>2</label>
    </ligand>
</feature>
<feature type="binding site" evidence="1">
    <location>
        <position position="1129"/>
    </location>
    <ligand>
        <name>ATP</name>
        <dbReference type="ChEBI" id="CHEBI:30616"/>
        <label>2</label>
    </ligand>
</feature>
<feature type="binding site" evidence="1">
    <location>
        <position position="1134"/>
    </location>
    <ligand>
        <name>ATP</name>
        <dbReference type="ChEBI" id="CHEBI:30616"/>
        <label>2</label>
    </ligand>
</feature>
<feature type="binding site" evidence="1">
    <location>
        <position position="1159"/>
    </location>
    <ligand>
        <name>ATP</name>
        <dbReference type="ChEBI" id="CHEBI:30616"/>
        <label>2</label>
    </ligand>
</feature>
<feature type="binding site" evidence="1">
    <location>
        <position position="1160"/>
    </location>
    <ligand>
        <name>ATP</name>
        <dbReference type="ChEBI" id="CHEBI:30616"/>
        <label>2</label>
    </ligand>
</feature>
<feature type="binding site" evidence="1">
    <location>
        <position position="1161"/>
    </location>
    <ligand>
        <name>ATP</name>
        <dbReference type="ChEBI" id="CHEBI:30616"/>
        <label>2</label>
    </ligand>
</feature>
<feature type="binding site" evidence="1">
    <location>
        <position position="1162"/>
    </location>
    <ligand>
        <name>ATP</name>
        <dbReference type="ChEBI" id="CHEBI:30616"/>
        <label>2</label>
    </ligand>
</feature>
<feature type="binding site" evidence="1">
    <location>
        <position position="1202"/>
    </location>
    <ligand>
        <name>ATP</name>
        <dbReference type="ChEBI" id="CHEBI:30616"/>
        <label>2</label>
    </ligand>
</feature>
<feature type="binding site" evidence="7">
    <location>
        <position position="1202"/>
    </location>
    <ligand>
        <name>Mg(2+)</name>
        <dbReference type="ChEBI" id="CHEBI:18420"/>
        <label>3</label>
    </ligand>
</feature>
<feature type="binding site" evidence="7">
    <location>
        <position position="1202"/>
    </location>
    <ligand>
        <name>Mn(2+)</name>
        <dbReference type="ChEBI" id="CHEBI:29035"/>
        <label>3</label>
    </ligand>
</feature>
<feature type="binding site" evidence="1">
    <location>
        <position position="1214"/>
    </location>
    <ligand>
        <name>ATP</name>
        <dbReference type="ChEBI" id="CHEBI:30616"/>
        <label>2</label>
    </ligand>
</feature>
<feature type="binding site" evidence="7">
    <location>
        <position position="1214"/>
    </location>
    <ligand>
        <name>Mg(2+)</name>
        <dbReference type="ChEBI" id="CHEBI:18420"/>
        <label>3</label>
    </ligand>
</feature>
<feature type="binding site" evidence="7">
    <location>
        <position position="1214"/>
    </location>
    <ligand>
        <name>Mg(2+)</name>
        <dbReference type="ChEBI" id="CHEBI:18420"/>
        <label>4</label>
    </ligand>
</feature>
<feature type="binding site" evidence="7">
    <location>
        <position position="1214"/>
    </location>
    <ligand>
        <name>Mn(2+)</name>
        <dbReference type="ChEBI" id="CHEBI:29035"/>
        <label>3</label>
    </ligand>
</feature>
<feature type="binding site" evidence="7">
    <location>
        <position position="1214"/>
    </location>
    <ligand>
        <name>Mn(2+)</name>
        <dbReference type="ChEBI" id="CHEBI:29035"/>
        <label>4</label>
    </ligand>
</feature>
<feature type="binding site" evidence="7">
    <location>
        <position position="1216"/>
    </location>
    <ligand>
        <name>Mg(2+)</name>
        <dbReference type="ChEBI" id="CHEBI:18420"/>
        <label>4</label>
    </ligand>
</feature>
<feature type="binding site" evidence="7">
    <location>
        <position position="1216"/>
    </location>
    <ligand>
        <name>Mn(2+)</name>
        <dbReference type="ChEBI" id="CHEBI:29035"/>
        <label>4</label>
    </ligand>
</feature>
<feature type="binding site" evidence="18 26">
    <location>
        <position position="1471"/>
    </location>
    <ligand>
        <name>Zn(2+)</name>
        <dbReference type="ChEBI" id="CHEBI:29105"/>
        <label>1</label>
    </ligand>
</feature>
<feature type="binding site" evidence="18 26">
    <location>
        <position position="1471"/>
    </location>
    <ligand>
        <name>Zn(2+)</name>
        <dbReference type="ChEBI" id="CHEBI:29105"/>
        <label>2</label>
    </ligand>
</feature>
<feature type="binding site" evidence="18 26">
    <location>
        <position position="1473"/>
    </location>
    <ligand>
        <name>Zn(2+)</name>
        <dbReference type="ChEBI" id="CHEBI:29105"/>
        <label>1</label>
    </ligand>
</feature>
<feature type="binding site" evidence="18 27">
    <location>
        <position position="1475"/>
    </location>
    <ligand>
        <name>(S)-dihydroorotate</name>
        <dbReference type="ChEBI" id="CHEBI:30864"/>
    </ligand>
</feature>
<feature type="binding site" evidence="18 27">
    <location>
        <position position="1505"/>
    </location>
    <ligand>
        <name>(S)-dihydroorotate</name>
        <dbReference type="ChEBI" id="CHEBI:30864"/>
    </ligand>
</feature>
<feature type="binding site" description="via carbamate group" evidence="18 26">
    <location>
        <position position="1556"/>
    </location>
    <ligand>
        <name>Zn(2+)</name>
        <dbReference type="ChEBI" id="CHEBI:29105"/>
        <label>1</label>
    </ligand>
</feature>
<feature type="binding site" description="via carbamate group" evidence="18 26">
    <location>
        <position position="1556"/>
    </location>
    <ligand>
        <name>Zn(2+)</name>
        <dbReference type="ChEBI" id="CHEBI:29105"/>
        <label>3</label>
    </ligand>
</feature>
<feature type="binding site" evidence="18 26">
    <location>
        <position position="1590"/>
    </location>
    <ligand>
        <name>Zn(2+)</name>
        <dbReference type="ChEBI" id="CHEBI:29105"/>
        <label>3</label>
    </ligand>
</feature>
<feature type="binding site" evidence="18 26">
    <location>
        <position position="1613"/>
    </location>
    <ligand>
        <name>Zn(2+)</name>
        <dbReference type="ChEBI" id="CHEBI:29105"/>
        <label>2</label>
    </ligand>
</feature>
<feature type="binding site" evidence="18 26">
    <location>
        <position position="1614"/>
    </location>
    <ligand>
        <name>Zn(2+)</name>
        <dbReference type="ChEBI" id="CHEBI:29105"/>
        <label>3</label>
    </ligand>
</feature>
<feature type="binding site" evidence="18 26">
    <location>
        <position position="1637"/>
    </location>
    <ligand>
        <name>Zn(2+)</name>
        <dbReference type="ChEBI" id="CHEBI:29105"/>
        <label>2</label>
    </ligand>
</feature>
<feature type="binding site" evidence="18 27">
    <location>
        <position position="1661"/>
    </location>
    <ligand>
        <name>(S)-dihydroorotate</name>
        <dbReference type="ChEBI" id="CHEBI:30864"/>
    </ligand>
</feature>
<feature type="binding site" evidence="18 26">
    <location>
        <position position="1686"/>
    </location>
    <ligand>
        <name>Zn(2+)</name>
        <dbReference type="ChEBI" id="CHEBI:29105"/>
        <label>1</label>
    </ligand>
</feature>
<feature type="binding site" evidence="18 27">
    <location>
        <position position="1690"/>
    </location>
    <ligand>
        <name>(S)-dihydroorotate</name>
        <dbReference type="ChEBI" id="CHEBI:30864"/>
    </ligand>
</feature>
<feature type="binding site" evidence="18 27">
    <location>
        <position position="1702"/>
    </location>
    <ligand>
        <name>(S)-dihydroorotate</name>
        <dbReference type="ChEBI" id="CHEBI:30864"/>
    </ligand>
</feature>
<feature type="binding site" evidence="6">
    <location>
        <position position="1975"/>
    </location>
    <ligand>
        <name>carbamoyl phosphate</name>
        <dbReference type="ChEBI" id="CHEBI:58228"/>
    </ligand>
</feature>
<feature type="binding site" evidence="6">
    <location>
        <position position="1976"/>
    </location>
    <ligand>
        <name>carbamoyl phosphate</name>
        <dbReference type="ChEBI" id="CHEBI:58228"/>
    </ligand>
</feature>
<feature type="binding site" evidence="6">
    <location>
        <position position="2003"/>
    </location>
    <ligand>
        <name>L-aspartate</name>
        <dbReference type="ChEBI" id="CHEBI:29991"/>
    </ligand>
</feature>
<feature type="binding site" evidence="6">
    <location>
        <position position="2024"/>
    </location>
    <ligand>
        <name>carbamoyl phosphate</name>
        <dbReference type="ChEBI" id="CHEBI:58228"/>
    </ligand>
</feature>
<feature type="binding site" evidence="6">
    <location>
        <position position="2052"/>
    </location>
    <ligand>
        <name>carbamoyl phosphate</name>
        <dbReference type="ChEBI" id="CHEBI:58228"/>
    </ligand>
</feature>
<feature type="binding site" evidence="6">
    <location>
        <position position="2055"/>
    </location>
    <ligand>
        <name>carbamoyl phosphate</name>
        <dbReference type="ChEBI" id="CHEBI:58228"/>
    </ligand>
</feature>
<feature type="binding site" evidence="6">
    <location>
        <position position="2085"/>
    </location>
    <ligand>
        <name>L-aspartate</name>
        <dbReference type="ChEBI" id="CHEBI:29991"/>
    </ligand>
</feature>
<feature type="binding site" evidence="6">
    <location>
        <position position="2146"/>
    </location>
    <ligand>
        <name>L-aspartate</name>
        <dbReference type="ChEBI" id="CHEBI:29991"/>
    </ligand>
</feature>
<feature type="binding site" evidence="6">
    <location>
        <position position="2185"/>
    </location>
    <ligand>
        <name>carbamoyl phosphate</name>
        <dbReference type="ChEBI" id="CHEBI:58228"/>
    </ligand>
</feature>
<feature type="binding site" evidence="6">
    <location>
        <position position="2186"/>
    </location>
    <ligand>
        <name>carbamoyl phosphate</name>
        <dbReference type="ChEBI" id="CHEBI:58228"/>
    </ligand>
</feature>
<feature type="modified residue" description="N-acetylalanine" evidence="23 36 40 41">
    <location>
        <position position="2"/>
    </location>
</feature>
<feature type="modified residue" description="Phosphothreonine; by MAPK1" evidence="15">
    <location>
        <position position="456"/>
    </location>
</feature>
<feature type="modified residue" description="N6-acetyllysine" evidence="37">
    <location>
        <position position="747"/>
    </location>
</feature>
<feature type="modified residue" description="Phosphoserine" evidence="42">
    <location>
        <position position="1038"/>
    </location>
</feature>
<feature type="modified residue" description="Phosphoserine; by PKA" evidence="15 39 42">
    <location>
        <position position="1406"/>
    </location>
</feature>
<feature type="modified residue" description="N6-acetyllysine" evidence="37">
    <location>
        <position position="1411"/>
    </location>
</feature>
<feature type="modified residue" description="N6-carboxylysine" evidence="18">
    <location>
        <position position="1556"/>
    </location>
</feature>
<feature type="modified residue" description="Phosphoserine; by RPS6KB1 and PKA" evidence="15 16 17 32 33 35 38 39 42 43">
    <location>
        <position position="1859"/>
    </location>
</feature>
<feature type="modified residue" description="Phosphoserine; by PKC; in vitro" evidence="15">
    <location>
        <position position="1873"/>
    </location>
</feature>
<feature type="modified residue" description="Phosphothreonine" evidence="34 35">
    <location>
        <position position="1884"/>
    </location>
</feature>
<feature type="modified residue" description="Phosphoserine" evidence="16 38 42">
    <location>
        <position position="1900"/>
    </location>
</feature>
<feature type="modified residue" description="Phosphoserine" evidence="42">
    <location>
        <position position="1938"/>
    </location>
</feature>
<feature type="sequence variant" id="VAR_078289" description="In DEE50; uncertain significance; dbSNP:rs751610198." evidence="21">
    <original>M</original>
    <variation>R</variation>
    <location>
        <position position="33"/>
    </location>
</feature>
<feature type="sequence variant" id="VAR_035897" description="In a colorectal cancer sample; somatic mutation; dbSNP:rs374122292." evidence="14">
    <original>R</original>
    <variation>Q</variation>
    <location>
        <position position="177"/>
    </location>
</feature>
<feature type="sequence variant" id="VAR_035898" description="In a colorectal cancer sample; somatic mutation." evidence="14">
    <original>Y</original>
    <variation>C</variation>
    <location>
        <position position="735"/>
    </location>
</feature>
<feature type="sequence variant" id="VAR_078290" description="In DEE50; uncertain significance." evidence="21">
    <location>
        <begin position="1789"/>
        <end position="2225"/>
    </location>
</feature>
<feature type="sequence variant" id="VAR_073955" description="In DEE50; dbSNP:rs763410987." evidence="19">
    <original>R</original>
    <variation>Q</variation>
    <location>
        <position position="2024"/>
    </location>
</feature>
<feature type="mutagenesis site" description="No zinc-binding and no catalytic activity." evidence="18 22">
    <original>H</original>
    <variation>A</variation>
    <location>
        <position position="1471"/>
    </location>
</feature>
<feature type="mutagenesis site" description="Abolishes dihydroorotase activity." evidence="18 22">
    <original>H</original>
    <variation>N</variation>
    <location>
        <position position="1471"/>
    </location>
</feature>
<feature type="mutagenesis site" description="No zinc-binding and no catalytic activity." evidence="22">
    <original>H</original>
    <variation>A</variation>
    <location>
        <position position="1473"/>
    </location>
</feature>
<feature type="mutagenesis site" description="No change in catalytic activity." evidence="22">
    <original>D</original>
    <variation>N</variation>
    <location>
        <position position="1512"/>
    </location>
</feature>
<feature type="mutagenesis site" description="Abolishes dihydroorotase activity." evidence="18">
    <original>T</original>
    <variation>A</variation>
    <location>
        <position position="1562"/>
    </location>
</feature>
<feature type="mutagenesis site" description="Abolishes dihydroorotase activity." evidence="18">
    <original>F</original>
    <variation>A</variation>
    <location>
        <position position="1563"/>
    </location>
</feature>
<feature type="mutagenesis site" description="Abolishes dihydroorotase activity." evidence="18 22">
    <original>H</original>
    <variation>A</variation>
    <location>
        <position position="1590"/>
    </location>
</feature>
<feature type="mutagenesis site" description="No catalytic activity." evidence="18 22">
    <original>H</original>
    <variation>N</variation>
    <location>
        <position position="1590"/>
    </location>
</feature>
<feature type="mutagenesis site" description="Reduces dihydroorotase activity." evidence="18">
    <original>C</original>
    <variation>S</variation>
    <location>
        <position position="1613"/>
    </location>
</feature>
<feature type="mutagenesis site" description="Abolishes dihydroorotase activity." evidence="18">
    <original>H</original>
    <variation>A</variation>
    <location>
        <position position="1614"/>
    </location>
</feature>
<feature type="mutagenesis site" description="Abolishes dihydroorotase activity." evidence="18">
    <original>E</original>
    <variation>T</variation>
    <location>
        <position position="1637"/>
    </location>
</feature>
<feature type="mutagenesis site" description="11.5% of wild-type catalytic activity." evidence="22">
    <original>H</original>
    <variation>N</variation>
    <location>
        <position position="1642"/>
    </location>
</feature>
<feature type="mutagenesis site" description="Abolishes dihydroorotase activity." evidence="18">
    <original>D</original>
    <variation>N</variation>
    <location>
        <position position="1686"/>
    </location>
</feature>
<feature type="mutagenesis site" description="3% of wild-type catalytic activity." evidence="22">
    <original>H</original>
    <variation>N</variation>
    <location>
        <position position="1690"/>
    </location>
</feature>
<feature type="mutagenesis site" description="Abolishes PMA-induced Thr-456 phosphorylation." evidence="15">
    <original>S</original>
    <variation>A</variation>
    <location>
        <position position="1873"/>
    </location>
</feature>
<feature type="sequence conflict" description="In Ref. 1; BAA11423." evidence="24" ref="1">
    <original>P</original>
    <variation>T</variation>
    <location>
        <position position="505"/>
    </location>
</feature>
<feature type="sequence conflict" description="In Ref. 1; BAA11423." evidence="24" ref="1">
    <original>A</original>
    <variation>G</variation>
    <location>
        <position position="535"/>
    </location>
</feature>
<feature type="sequence conflict" description="In Ref. 1; BAA11423." evidence="24" ref="1">
    <original>L</original>
    <variation>V</variation>
    <location>
        <position position="560"/>
    </location>
</feature>
<feature type="sequence conflict" description="In Ref. 1; BAA11423." evidence="24" ref="1">
    <original>T</original>
    <variation>A</variation>
    <location>
        <position position="1103"/>
    </location>
</feature>
<feature type="sequence conflict" description="In Ref. 1; BAA11423." evidence="24" ref="1">
    <original>A</original>
    <variation>G</variation>
    <location>
        <position position="1513"/>
    </location>
</feature>
<feature type="sequence conflict" description="In Ref. 1; BAA11423." evidence="24" ref="1">
    <original>N</original>
    <variation>D</variation>
    <location>
        <position position="1676"/>
    </location>
</feature>
<feature type="strand" evidence="50">
    <location>
        <begin position="1462"/>
        <end position="1465"/>
    </location>
</feature>
<feature type="strand" evidence="50">
    <location>
        <begin position="1467"/>
        <end position="1472"/>
    </location>
</feature>
<feature type="turn" evidence="50">
    <location>
        <begin position="1476"/>
        <end position="1478"/>
    </location>
</feature>
<feature type="turn" evidence="50">
    <location>
        <begin position="1480"/>
        <end position="1482"/>
    </location>
</feature>
<feature type="helix" evidence="50">
    <location>
        <begin position="1485"/>
        <end position="1494"/>
    </location>
</feature>
<feature type="strand" evidence="50">
    <location>
        <begin position="1497"/>
        <end position="1502"/>
    </location>
</feature>
<feature type="strand" evidence="50">
    <location>
        <begin position="1506"/>
        <end position="1508"/>
    </location>
</feature>
<feature type="helix" evidence="50">
    <location>
        <begin position="1513"/>
        <end position="1526"/>
    </location>
</feature>
<feature type="strand" evidence="50">
    <location>
        <begin position="1528"/>
        <end position="1533"/>
    </location>
</feature>
<feature type="turn" evidence="49">
    <location>
        <begin position="1542"/>
        <end position="1544"/>
    </location>
</feature>
<feature type="turn" evidence="50">
    <location>
        <begin position="1546"/>
        <end position="1548"/>
    </location>
</feature>
<feature type="helix" evidence="50">
    <location>
        <begin position="1549"/>
        <end position="1551"/>
    </location>
</feature>
<feature type="strand" evidence="50">
    <location>
        <begin position="1555"/>
        <end position="1558"/>
    </location>
</feature>
<feature type="strand" evidence="50">
    <location>
        <begin position="1560"/>
        <end position="1563"/>
    </location>
</feature>
<feature type="turn" evidence="48">
    <location>
        <begin position="1564"/>
        <end position="1566"/>
    </location>
</feature>
<feature type="helix" evidence="50">
    <location>
        <begin position="1571"/>
        <end position="1580"/>
    </location>
</feature>
<feature type="strand" evidence="50">
    <location>
        <begin position="1587"/>
        <end position="1590"/>
    </location>
</feature>
<feature type="helix" evidence="50">
    <location>
        <begin position="1594"/>
        <end position="1605"/>
    </location>
</feature>
<feature type="strand" evidence="50">
    <location>
        <begin position="1610"/>
        <end position="1612"/>
    </location>
</feature>
<feature type="helix" evidence="50">
    <location>
        <begin position="1618"/>
        <end position="1629"/>
    </location>
</feature>
<feature type="strand" evidence="50">
    <location>
        <begin position="1634"/>
        <end position="1638"/>
    </location>
</feature>
<feature type="helix" evidence="50">
    <location>
        <begin position="1640"/>
        <end position="1644"/>
    </location>
</feature>
<feature type="helix" evidence="50">
    <location>
        <begin position="1647"/>
        <end position="1649"/>
    </location>
</feature>
<feature type="helix" evidence="50">
    <location>
        <begin position="1650"/>
        <end position="1657"/>
    </location>
</feature>
<feature type="helix" evidence="50">
    <location>
        <begin position="1667"/>
        <end position="1675"/>
    </location>
</feature>
<feature type="helix" evidence="50">
    <location>
        <begin position="1677"/>
        <end position="1679"/>
    </location>
</feature>
<feature type="helix" evidence="50">
    <location>
        <begin position="1692"/>
        <end position="1695"/>
    </location>
</feature>
<feature type="strand" evidence="50">
    <location>
        <begin position="1697"/>
        <end position="1699"/>
    </location>
</feature>
<feature type="helix" evidence="50">
    <location>
        <begin position="1707"/>
        <end position="1719"/>
    </location>
</feature>
<feature type="strand" evidence="47">
    <location>
        <begin position="1721"/>
        <end position="1723"/>
    </location>
</feature>
<feature type="helix" evidence="50">
    <location>
        <begin position="1725"/>
        <end position="1732"/>
    </location>
</feature>
<feature type="helix" evidence="50">
    <location>
        <begin position="1734"/>
        <end position="1740"/>
    </location>
</feature>
<feature type="strand" evidence="50">
    <location>
        <begin position="1749"/>
        <end position="1759"/>
    </location>
</feature>
<feature type="turn" evidence="50">
    <location>
        <begin position="1773"/>
        <end position="1776"/>
    </location>
</feature>
<feature type="strand" evidence="50">
    <location>
        <begin position="1778"/>
        <end position="1788"/>
    </location>
</feature>
<feature type="strand" evidence="50">
    <location>
        <begin position="1791"/>
        <end position="1795"/>
    </location>
</feature>
<feature type="helix" evidence="50">
    <location>
        <begin position="1809"/>
        <end position="1811"/>
    </location>
</feature>
<feature type="helix" evidence="50">
    <location>
        <begin position="1813"/>
        <end position="1815"/>
    </location>
</feature>
<feature type="helix" evidence="44">
    <location>
        <begin position="1929"/>
        <end position="1931"/>
    </location>
</feature>
<feature type="helix" evidence="44">
    <location>
        <begin position="1934"/>
        <end position="1952"/>
    </location>
</feature>
<feature type="turn" evidence="44">
    <location>
        <begin position="1959"/>
        <end position="1962"/>
    </location>
</feature>
<feature type="strand" evidence="44">
    <location>
        <begin position="1964"/>
        <end position="1971"/>
    </location>
</feature>
<feature type="helix" evidence="44">
    <location>
        <begin position="1975"/>
        <end position="1986"/>
    </location>
</feature>
<feature type="strand" evidence="44">
    <location>
        <begin position="1990"/>
        <end position="1995"/>
    </location>
</feature>
<feature type="helix" evidence="44">
    <location>
        <begin position="1996"/>
        <end position="1998"/>
    </location>
</feature>
<feature type="helix" evidence="44">
    <location>
        <begin position="2000"/>
        <end position="2003"/>
    </location>
</feature>
<feature type="helix" evidence="44">
    <location>
        <begin position="2007"/>
        <end position="2014"/>
    </location>
</feature>
<feature type="turn" evidence="44">
    <location>
        <begin position="2015"/>
        <end position="2017"/>
    </location>
</feature>
<feature type="strand" evidence="44">
    <location>
        <begin position="2019"/>
        <end position="2027"/>
    </location>
</feature>
<feature type="helix" evidence="44">
    <location>
        <begin position="2030"/>
        <end position="2035"/>
    </location>
</feature>
<feature type="strand" evidence="44">
    <location>
        <begin position="2042"/>
        <end position="2047"/>
    </location>
</feature>
<feature type="helix" evidence="44">
    <location>
        <begin position="2053"/>
        <end position="2067"/>
    </location>
</feature>
<feature type="strand" evidence="44">
    <location>
        <begin position="2074"/>
        <end position="2079"/>
    </location>
</feature>
<feature type="turn" evidence="44">
    <location>
        <begin position="2081"/>
        <end position="2083"/>
    </location>
</feature>
<feature type="helix" evidence="44">
    <location>
        <begin position="2085"/>
        <end position="2094"/>
    </location>
</feature>
<feature type="strand" evidence="44">
    <location>
        <begin position="2100"/>
        <end position="2104"/>
    </location>
</feature>
<feature type="strand" evidence="46">
    <location>
        <begin position="2107"/>
        <end position="2109"/>
    </location>
</feature>
<feature type="helix" evidence="44">
    <location>
        <begin position="2113"/>
        <end position="2121"/>
    </location>
</feature>
<feature type="strand" evidence="44">
    <location>
        <begin position="2126"/>
        <end position="2131"/>
    </location>
</feature>
<feature type="helix" evidence="44">
    <location>
        <begin position="2132"/>
        <end position="2135"/>
    </location>
</feature>
<feature type="helix" evidence="45">
    <location>
        <begin position="2136"/>
        <end position="2138"/>
    </location>
</feature>
<feature type="strand" evidence="44">
    <location>
        <begin position="2140"/>
        <end position="2144"/>
    </location>
</feature>
<feature type="helix" evidence="44">
    <location>
        <begin position="2149"/>
        <end position="2151"/>
    </location>
</feature>
<feature type="helix" evidence="44">
    <location>
        <begin position="2155"/>
        <end position="2160"/>
    </location>
</feature>
<feature type="helix" evidence="44">
    <location>
        <begin position="2169"/>
        <end position="2172"/>
    </location>
</feature>
<feature type="strand" evidence="44">
    <location>
        <begin position="2180"/>
        <end position="2182"/>
    </location>
</feature>
<feature type="strand" evidence="44">
    <location>
        <begin position="2188"/>
        <end position="2191"/>
    </location>
</feature>
<feature type="helix" evidence="44">
    <location>
        <begin position="2193"/>
        <end position="2195"/>
    </location>
</feature>
<feature type="helix" evidence="44">
    <location>
        <begin position="2203"/>
        <end position="2221"/>
    </location>
</feature>
<dbReference type="EC" id="6.3.5.5" evidence="18"/>
<dbReference type="EC" id="3.5.1.2" evidence="3"/>
<dbReference type="EC" id="6.3.4.16" evidence="3"/>
<dbReference type="EC" id="2.1.3.2" evidence="18"/>
<dbReference type="EC" id="3.5.2.3" evidence="18"/>
<dbReference type="EMBL" id="D78586">
    <property type="protein sequence ID" value="BAA11423.1"/>
    <property type="molecule type" value="mRNA"/>
</dbReference>
<dbReference type="EMBL" id="CH471053">
    <property type="protein sequence ID" value="EAX00612.1"/>
    <property type="molecule type" value="Genomic_DNA"/>
</dbReference>
<dbReference type="EMBL" id="CH471053">
    <property type="protein sequence ID" value="EAX00613.1"/>
    <property type="molecule type" value="Genomic_DNA"/>
</dbReference>
<dbReference type="EMBL" id="CH471053">
    <property type="protein sequence ID" value="EAX00614.1"/>
    <property type="molecule type" value="Genomic_DNA"/>
</dbReference>
<dbReference type="EMBL" id="BC014178">
    <property type="protein sequence ID" value="AAH14178.2"/>
    <property type="molecule type" value="mRNA"/>
</dbReference>
<dbReference type="EMBL" id="BC065510">
    <property type="protein sequence ID" value="AAH65510.1"/>
    <property type="molecule type" value="mRNA"/>
</dbReference>
<dbReference type="EMBL" id="M38561">
    <property type="protein sequence ID" value="AAA51907.1"/>
    <property type="molecule type" value="Genomic_DNA"/>
</dbReference>
<dbReference type="CCDS" id="CCDS1742.1"/>
<dbReference type="PIR" id="A36240">
    <property type="entry name" value="A36240"/>
</dbReference>
<dbReference type="RefSeq" id="NP_001293008.1">
    <property type="nucleotide sequence ID" value="NM_001306079.1"/>
</dbReference>
<dbReference type="RefSeq" id="NP_004332.2">
    <property type="nucleotide sequence ID" value="NM_004341.4"/>
</dbReference>
<dbReference type="PDB" id="4BY3">
    <property type="method" value="X-ray"/>
    <property type="resolution" value="1.73 A"/>
    <property type="chains" value="A=1456-1846"/>
</dbReference>
<dbReference type="PDB" id="4C6B">
    <property type="method" value="X-ray"/>
    <property type="resolution" value="1.66 A"/>
    <property type="chains" value="A=1456-1846"/>
</dbReference>
<dbReference type="PDB" id="4C6C">
    <property type="method" value="X-ray"/>
    <property type="resolution" value="1.45 A"/>
    <property type="chains" value="A=1456-1846"/>
</dbReference>
<dbReference type="PDB" id="4C6D">
    <property type="method" value="X-ray"/>
    <property type="resolution" value="1.30 A"/>
    <property type="chains" value="A=1456-1846"/>
</dbReference>
<dbReference type="PDB" id="4C6E">
    <property type="method" value="X-ray"/>
    <property type="resolution" value="1.26 A"/>
    <property type="chains" value="A=1456-1846"/>
</dbReference>
<dbReference type="PDB" id="4C6F">
    <property type="method" value="X-ray"/>
    <property type="resolution" value="1.26 A"/>
    <property type="chains" value="A=1456-1846"/>
</dbReference>
<dbReference type="PDB" id="4C6I">
    <property type="method" value="X-ray"/>
    <property type="resolution" value="1.35 A"/>
    <property type="chains" value="A=1456-1846"/>
</dbReference>
<dbReference type="PDB" id="4C6J">
    <property type="method" value="X-ray"/>
    <property type="resolution" value="1.30 A"/>
    <property type="chains" value="A=1456-1846"/>
</dbReference>
<dbReference type="PDB" id="4C6K">
    <property type="method" value="X-ray"/>
    <property type="resolution" value="1.48 A"/>
    <property type="chains" value="A=1456-1846"/>
</dbReference>
<dbReference type="PDB" id="4C6L">
    <property type="method" value="X-ray"/>
    <property type="resolution" value="1.55 A"/>
    <property type="chains" value="A=1456-1846"/>
</dbReference>
<dbReference type="PDB" id="4C6M">
    <property type="method" value="X-ray"/>
    <property type="resolution" value="1.62 A"/>
    <property type="chains" value="A=1456-1846"/>
</dbReference>
<dbReference type="PDB" id="4C6N">
    <property type="method" value="X-ray"/>
    <property type="resolution" value="1.90 A"/>
    <property type="chains" value="A=1456-1846"/>
</dbReference>
<dbReference type="PDB" id="4C6O">
    <property type="method" value="X-ray"/>
    <property type="resolution" value="1.65 A"/>
    <property type="chains" value="A=1456-1846"/>
</dbReference>
<dbReference type="PDB" id="4C6P">
    <property type="method" value="X-ray"/>
    <property type="resolution" value="1.52 A"/>
    <property type="chains" value="A=1456-1846"/>
</dbReference>
<dbReference type="PDB" id="4C6Q">
    <property type="method" value="X-ray"/>
    <property type="resolution" value="1.66 A"/>
    <property type="chains" value="A=1456-1846"/>
</dbReference>
<dbReference type="PDB" id="5G1N">
    <property type="method" value="X-ray"/>
    <property type="resolution" value="2.10 A"/>
    <property type="chains" value="A/B/C/D/E/F=1915-2225"/>
</dbReference>
<dbReference type="PDB" id="5G1O">
    <property type="method" value="X-ray"/>
    <property type="resolution" value="2.10 A"/>
    <property type="chains" value="A/B/C/D/E/F=1915-2225"/>
</dbReference>
<dbReference type="PDB" id="5G1P">
    <property type="method" value="X-ray"/>
    <property type="resolution" value="3.19 A"/>
    <property type="chains" value="A/B/C/D/E/F=1915-2225"/>
</dbReference>
<dbReference type="PDB" id="5YNZ">
    <property type="method" value="X-ray"/>
    <property type="resolution" value="2.77 A"/>
    <property type="chains" value="A=1456-1846"/>
</dbReference>
<dbReference type="PDB" id="6HFD">
    <property type="method" value="X-ray"/>
    <property type="resolution" value="1.87 A"/>
    <property type="chains" value="A=1456-1846"/>
</dbReference>
<dbReference type="PDB" id="6HFE">
    <property type="method" value="X-ray"/>
    <property type="resolution" value="1.48 A"/>
    <property type="chains" value="A=1456-1846"/>
</dbReference>
<dbReference type="PDB" id="6HFF">
    <property type="method" value="X-ray"/>
    <property type="resolution" value="1.51 A"/>
    <property type="chains" value="A=1456-1846"/>
</dbReference>
<dbReference type="PDB" id="6HFH">
    <property type="method" value="X-ray"/>
    <property type="resolution" value="1.45 A"/>
    <property type="chains" value="A=1456-1846"/>
</dbReference>
<dbReference type="PDB" id="6HFI">
    <property type="method" value="X-ray"/>
    <property type="resolution" value="1.46 A"/>
    <property type="chains" value="A=1456-1846"/>
</dbReference>
<dbReference type="PDB" id="6HFJ">
    <property type="method" value="X-ray"/>
    <property type="resolution" value="1.20 A"/>
    <property type="chains" value="A=1456-1846"/>
</dbReference>
<dbReference type="PDB" id="6HFK">
    <property type="method" value="X-ray"/>
    <property type="resolution" value="1.46 A"/>
    <property type="chains" value="A=1456-1846"/>
</dbReference>
<dbReference type="PDB" id="6HFL">
    <property type="method" value="X-ray"/>
    <property type="resolution" value="1.35 A"/>
    <property type="chains" value="A=1456-1846"/>
</dbReference>
<dbReference type="PDB" id="6HFN">
    <property type="method" value="X-ray"/>
    <property type="resolution" value="1.45 A"/>
    <property type="chains" value="A=1456-1846"/>
</dbReference>
<dbReference type="PDB" id="6HFP">
    <property type="method" value="X-ray"/>
    <property type="resolution" value="1.20 A"/>
    <property type="chains" value="A=1456-1846"/>
</dbReference>
<dbReference type="PDB" id="6HFQ">
    <property type="method" value="X-ray"/>
    <property type="resolution" value="1.15 A"/>
    <property type="chains" value="A=1456-1846"/>
</dbReference>
<dbReference type="PDB" id="6HFR">
    <property type="method" value="X-ray"/>
    <property type="resolution" value="1.30 A"/>
    <property type="chains" value="A=1456-1846"/>
</dbReference>
<dbReference type="PDB" id="6HFS">
    <property type="method" value="X-ray"/>
    <property type="resolution" value="1.35 A"/>
    <property type="chains" value="A=1456-1846"/>
</dbReference>
<dbReference type="PDB" id="6HFU">
    <property type="method" value="X-ray"/>
    <property type="resolution" value="1.40 A"/>
    <property type="chains" value="A=1456-1846"/>
</dbReference>
<dbReference type="PDB" id="6HG1">
    <property type="method" value="X-ray"/>
    <property type="resolution" value="2.12 A"/>
    <property type="chains" value="A=1460-1559, A=1571-1826"/>
</dbReference>
<dbReference type="PDB" id="8GVZ">
    <property type="method" value="X-ray"/>
    <property type="resolution" value="1.97 A"/>
    <property type="chains" value="A=1456-1846"/>
</dbReference>
<dbReference type="PDB" id="8GW0">
    <property type="method" value="X-ray"/>
    <property type="resolution" value="1.64 A"/>
    <property type="chains" value="A=1456-1846"/>
</dbReference>
<dbReference type="PDB" id="8PBE">
    <property type="method" value="X-ray"/>
    <property type="resolution" value="1.71 A"/>
    <property type="chains" value="A=1460-1821"/>
</dbReference>
<dbReference type="PDB" id="8PBG">
    <property type="method" value="X-ray"/>
    <property type="resolution" value="1.46 A"/>
    <property type="chains" value="A=1460-1821"/>
</dbReference>
<dbReference type="PDB" id="8PBH">
    <property type="method" value="X-ray"/>
    <property type="resolution" value="1.87 A"/>
    <property type="chains" value="A=1460-1821"/>
</dbReference>
<dbReference type="PDB" id="8PBI">
    <property type="method" value="X-ray"/>
    <property type="resolution" value="1.50 A"/>
    <property type="chains" value="A=1460-1821"/>
</dbReference>
<dbReference type="PDB" id="8PBJ">
    <property type="method" value="X-ray"/>
    <property type="resolution" value="1.55 A"/>
    <property type="chains" value="A=1460-1821"/>
</dbReference>
<dbReference type="PDB" id="8PBK">
    <property type="method" value="X-ray"/>
    <property type="resolution" value="1.69 A"/>
    <property type="chains" value="A=1460-1821"/>
</dbReference>
<dbReference type="PDB" id="8PBM">
    <property type="method" value="X-ray"/>
    <property type="resolution" value="1.28 A"/>
    <property type="chains" value="A=1460-1821"/>
</dbReference>
<dbReference type="PDB" id="8PBN">
    <property type="method" value="X-ray"/>
    <property type="resolution" value="1.71 A"/>
    <property type="chains" value="A=1460-1821"/>
</dbReference>
<dbReference type="PDB" id="8PBP">
    <property type="method" value="X-ray"/>
    <property type="resolution" value="1.54 A"/>
    <property type="chains" value="A=1460-1821"/>
</dbReference>
<dbReference type="PDB" id="8PBQ">
    <property type="method" value="X-ray"/>
    <property type="resolution" value="1.54 A"/>
    <property type="chains" value="A=1460-1813"/>
</dbReference>
<dbReference type="PDB" id="8PBR">
    <property type="method" value="X-ray"/>
    <property type="resolution" value="2.06 A"/>
    <property type="chains" value="A=1460-1821"/>
</dbReference>
<dbReference type="PDB" id="8PBS">
    <property type="method" value="X-ray"/>
    <property type="resolution" value="2.05 A"/>
    <property type="chains" value="A=1460-1821"/>
</dbReference>
<dbReference type="PDB" id="8PBT">
    <property type="method" value="X-ray"/>
    <property type="resolution" value="1.43 A"/>
    <property type="chains" value="A=1460-1821"/>
</dbReference>
<dbReference type="PDB" id="8PBU">
    <property type="method" value="X-ray"/>
    <property type="resolution" value="1.67 A"/>
    <property type="chains" value="A=1460-1821"/>
</dbReference>
<dbReference type="PDB" id="9FS1">
    <property type="method" value="X-ray"/>
    <property type="resolution" value="1.21 A"/>
    <property type="chains" value="A=1461-1821"/>
</dbReference>
<dbReference type="PDB" id="9FS2">
    <property type="method" value="X-ray"/>
    <property type="resolution" value="1.12 A"/>
    <property type="chains" value="A=1460-1821"/>
</dbReference>
<dbReference type="PDB" id="9FS3">
    <property type="method" value="X-ray"/>
    <property type="resolution" value="1.18 A"/>
    <property type="chains" value="A=1460-1821"/>
</dbReference>
<dbReference type="PDBsum" id="4BY3"/>
<dbReference type="PDBsum" id="4C6B"/>
<dbReference type="PDBsum" id="4C6C"/>
<dbReference type="PDBsum" id="4C6D"/>
<dbReference type="PDBsum" id="4C6E"/>
<dbReference type="PDBsum" id="4C6F"/>
<dbReference type="PDBsum" id="4C6I"/>
<dbReference type="PDBsum" id="4C6J"/>
<dbReference type="PDBsum" id="4C6K"/>
<dbReference type="PDBsum" id="4C6L"/>
<dbReference type="PDBsum" id="4C6M"/>
<dbReference type="PDBsum" id="4C6N"/>
<dbReference type="PDBsum" id="4C6O"/>
<dbReference type="PDBsum" id="4C6P"/>
<dbReference type="PDBsum" id="4C6Q"/>
<dbReference type="PDBsum" id="5G1N"/>
<dbReference type="PDBsum" id="5G1O"/>
<dbReference type="PDBsum" id="5G1P"/>
<dbReference type="PDBsum" id="5YNZ"/>
<dbReference type="PDBsum" id="6HFD"/>
<dbReference type="PDBsum" id="6HFE"/>
<dbReference type="PDBsum" id="6HFF"/>
<dbReference type="PDBsum" id="6HFH"/>
<dbReference type="PDBsum" id="6HFI"/>
<dbReference type="PDBsum" id="6HFJ"/>
<dbReference type="PDBsum" id="6HFK"/>
<dbReference type="PDBsum" id="6HFL"/>
<dbReference type="PDBsum" id="6HFN"/>
<dbReference type="PDBsum" id="6HFP"/>
<dbReference type="PDBsum" id="6HFQ"/>
<dbReference type="PDBsum" id="6HFR"/>
<dbReference type="PDBsum" id="6HFS"/>
<dbReference type="PDBsum" id="6HFU"/>
<dbReference type="PDBsum" id="6HG1"/>
<dbReference type="PDBsum" id="8GVZ"/>
<dbReference type="PDBsum" id="8GW0"/>
<dbReference type="PDBsum" id="8PBE"/>
<dbReference type="PDBsum" id="8PBG"/>
<dbReference type="PDBsum" id="8PBH"/>
<dbReference type="PDBsum" id="8PBI"/>
<dbReference type="PDBsum" id="8PBJ"/>
<dbReference type="PDBsum" id="8PBK"/>
<dbReference type="PDBsum" id="8PBM"/>
<dbReference type="PDBsum" id="8PBN"/>
<dbReference type="PDBsum" id="8PBP"/>
<dbReference type="PDBsum" id="8PBQ"/>
<dbReference type="PDBsum" id="8PBR"/>
<dbReference type="PDBsum" id="8PBS"/>
<dbReference type="PDBsum" id="8PBT"/>
<dbReference type="PDBsum" id="8PBU"/>
<dbReference type="PDBsum" id="9FS1"/>
<dbReference type="PDBsum" id="9FS2"/>
<dbReference type="PDBsum" id="9FS3"/>
<dbReference type="SMR" id="P27708"/>
<dbReference type="BioGRID" id="107243">
    <property type="interactions" value="436"/>
</dbReference>
<dbReference type="DIP" id="DIP-39484N"/>
<dbReference type="FunCoup" id="P27708">
    <property type="interactions" value="2533"/>
</dbReference>
<dbReference type="IntAct" id="P27708">
    <property type="interactions" value="142"/>
</dbReference>
<dbReference type="MINT" id="P27708"/>
<dbReference type="STRING" id="9606.ENSP00000264705"/>
<dbReference type="BindingDB" id="P27708"/>
<dbReference type="ChEMBL" id="CHEMBL3093"/>
<dbReference type="DrugBank" id="DB00128">
    <property type="generic name" value="Aspartic acid"/>
</dbReference>
<dbReference type="DrugBank" id="DB00130">
    <property type="generic name" value="L-Glutamine"/>
</dbReference>
<dbReference type="DrugBank" id="DB03459">
    <property type="generic name" value="Sparfosic acid"/>
</dbReference>
<dbReference type="MEROPS" id="C26.952"/>
<dbReference type="MEROPS" id="M38.972"/>
<dbReference type="GlyCosmos" id="P27708">
    <property type="glycosylation" value="3 sites, 1 glycan"/>
</dbReference>
<dbReference type="GlyGen" id="P27708">
    <property type="glycosylation" value="7 sites, 1 O-linked glycan (5 sites)"/>
</dbReference>
<dbReference type="iPTMnet" id="P27708"/>
<dbReference type="MetOSite" id="P27708"/>
<dbReference type="PhosphoSitePlus" id="P27708"/>
<dbReference type="SwissPalm" id="P27708"/>
<dbReference type="BioMuta" id="CAD"/>
<dbReference type="DMDM" id="50403731"/>
<dbReference type="CPTAC" id="CPTAC-466"/>
<dbReference type="CPTAC" id="CPTAC-467"/>
<dbReference type="jPOST" id="P27708"/>
<dbReference type="MassIVE" id="P27708"/>
<dbReference type="PaxDb" id="9606-ENSP00000264705"/>
<dbReference type="PeptideAtlas" id="P27708"/>
<dbReference type="ProteomicsDB" id="54409"/>
<dbReference type="Pumba" id="P27708"/>
<dbReference type="Antibodypedia" id="28293">
    <property type="antibodies" value="336 antibodies from 35 providers"/>
</dbReference>
<dbReference type="DNASU" id="790"/>
<dbReference type="Ensembl" id="ENST00000264705.9">
    <property type="protein sequence ID" value="ENSP00000264705.3"/>
    <property type="gene ID" value="ENSG00000084774.14"/>
</dbReference>
<dbReference type="GeneID" id="790"/>
<dbReference type="KEGG" id="hsa:790"/>
<dbReference type="MANE-Select" id="ENST00000264705.9">
    <property type="protein sequence ID" value="ENSP00000264705.3"/>
    <property type="RefSeq nucleotide sequence ID" value="NM_004341.5"/>
    <property type="RefSeq protein sequence ID" value="NP_004332.2"/>
</dbReference>
<dbReference type="UCSC" id="uc002rji.4">
    <property type="organism name" value="human"/>
</dbReference>
<dbReference type="AGR" id="HGNC:1424"/>
<dbReference type="CTD" id="790"/>
<dbReference type="DisGeNET" id="790"/>
<dbReference type="GeneCards" id="CAD"/>
<dbReference type="HGNC" id="HGNC:1424">
    <property type="gene designation" value="CAD"/>
</dbReference>
<dbReference type="HPA" id="ENSG00000084774">
    <property type="expression patterns" value="Low tissue specificity"/>
</dbReference>
<dbReference type="MalaCards" id="CAD"/>
<dbReference type="MIM" id="114010">
    <property type="type" value="gene"/>
</dbReference>
<dbReference type="MIM" id="616457">
    <property type="type" value="phenotype"/>
</dbReference>
<dbReference type="neXtProt" id="NX_P27708"/>
<dbReference type="OpenTargets" id="ENSG00000084774"/>
<dbReference type="Orphanet" id="448010">
    <property type="disease" value="CAD-CDG"/>
</dbReference>
<dbReference type="PharmGKB" id="PA26023"/>
<dbReference type="VEuPathDB" id="HostDB:ENSG00000084774"/>
<dbReference type="eggNOG" id="KOG0370">
    <property type="taxonomic scope" value="Eukaryota"/>
</dbReference>
<dbReference type="GeneTree" id="ENSGT00940000157241"/>
<dbReference type="HOGENOM" id="CLU_000513_2_1_1"/>
<dbReference type="InParanoid" id="P27708"/>
<dbReference type="OMA" id="WSPFNGK"/>
<dbReference type="OrthoDB" id="434at2759"/>
<dbReference type="PAN-GO" id="P27708">
    <property type="GO annotations" value="8 GO annotations based on evolutionary models"/>
</dbReference>
<dbReference type="PhylomeDB" id="P27708"/>
<dbReference type="TreeFam" id="TF105604"/>
<dbReference type="BioCyc" id="MetaCyc:ENSG00000084774-MONOMER"/>
<dbReference type="BRENDA" id="2.1.3.2">
    <property type="organism ID" value="2681"/>
</dbReference>
<dbReference type="BRENDA" id="3.5.2.3">
    <property type="organism ID" value="2681"/>
</dbReference>
<dbReference type="BRENDA" id="6.3.5.5">
    <property type="organism ID" value="2681"/>
</dbReference>
<dbReference type="PathwayCommons" id="P27708"/>
<dbReference type="Reactome" id="R-HSA-500753">
    <property type="pathway name" value="Pyrimidine biosynthesis"/>
</dbReference>
<dbReference type="SABIO-RK" id="P27708"/>
<dbReference type="SignaLink" id="P27708"/>
<dbReference type="SIGNOR" id="P27708"/>
<dbReference type="UniPathway" id="UPA00070">
    <property type="reaction ID" value="UER00115"/>
</dbReference>
<dbReference type="UniPathway" id="UPA00070">
    <property type="reaction ID" value="UER00116"/>
</dbReference>
<dbReference type="UniPathway" id="UPA00070">
    <property type="reaction ID" value="UER00117"/>
</dbReference>
<dbReference type="BioGRID-ORCS" id="790">
    <property type="hits" value="303 hits in 1179 CRISPR screens"/>
</dbReference>
<dbReference type="CD-CODE" id="91857CE7">
    <property type="entry name" value="Nucleolus"/>
</dbReference>
<dbReference type="CD-CODE" id="FB4E32DD">
    <property type="entry name" value="Presynaptic clusters and postsynaptic densities"/>
</dbReference>
<dbReference type="ChiTaRS" id="CAD">
    <property type="organism name" value="human"/>
</dbReference>
<dbReference type="EvolutionaryTrace" id="P27708"/>
<dbReference type="GenomeRNAi" id="790"/>
<dbReference type="Pharos" id="P27708">
    <property type="development level" value="Tchem"/>
</dbReference>
<dbReference type="PRO" id="PR:P27708"/>
<dbReference type="Proteomes" id="UP000005640">
    <property type="component" value="Chromosome 2"/>
</dbReference>
<dbReference type="RNAct" id="P27708">
    <property type="molecule type" value="protein"/>
</dbReference>
<dbReference type="Bgee" id="ENSG00000084774">
    <property type="expression patterns" value="Expressed in body of uterus and 141 other cell types or tissues"/>
</dbReference>
<dbReference type="ExpressionAtlas" id="P27708">
    <property type="expression patterns" value="baseline and differential"/>
</dbReference>
<dbReference type="GO" id="GO:0042995">
    <property type="term" value="C:cell projection"/>
    <property type="evidence" value="ECO:0000250"/>
    <property type="project" value="BHF-UCL"/>
</dbReference>
<dbReference type="GO" id="GO:0005737">
    <property type="term" value="C:cytoplasm"/>
    <property type="evidence" value="ECO:0000318"/>
    <property type="project" value="GO_Central"/>
</dbReference>
<dbReference type="GO" id="GO:0005829">
    <property type="term" value="C:cytosol"/>
    <property type="evidence" value="ECO:0000314"/>
    <property type="project" value="BHF-UCL"/>
</dbReference>
<dbReference type="GO" id="GO:0070062">
    <property type="term" value="C:extracellular exosome"/>
    <property type="evidence" value="ECO:0007005"/>
    <property type="project" value="UniProtKB"/>
</dbReference>
<dbReference type="GO" id="GO:0016020">
    <property type="term" value="C:membrane"/>
    <property type="evidence" value="ECO:0007005"/>
    <property type="project" value="UniProtKB"/>
</dbReference>
<dbReference type="GO" id="GO:0043025">
    <property type="term" value="C:neuronal cell body"/>
    <property type="evidence" value="ECO:0000250"/>
    <property type="project" value="BHF-UCL"/>
</dbReference>
<dbReference type="GO" id="GO:0016363">
    <property type="term" value="C:nuclear matrix"/>
    <property type="evidence" value="ECO:0000314"/>
    <property type="project" value="BHF-UCL"/>
</dbReference>
<dbReference type="GO" id="GO:0005634">
    <property type="term" value="C:nucleus"/>
    <property type="evidence" value="ECO:0000314"/>
    <property type="project" value="BHF-UCL"/>
</dbReference>
<dbReference type="GO" id="GO:0032991">
    <property type="term" value="C:protein-containing complex"/>
    <property type="evidence" value="ECO:0007669"/>
    <property type="project" value="Ensembl"/>
</dbReference>
<dbReference type="GO" id="GO:0043195">
    <property type="term" value="C:terminal bouton"/>
    <property type="evidence" value="ECO:0000250"/>
    <property type="project" value="BHF-UCL"/>
</dbReference>
<dbReference type="GO" id="GO:0070335">
    <property type="term" value="F:aspartate binding"/>
    <property type="evidence" value="ECO:0000250"/>
    <property type="project" value="BHF-UCL"/>
</dbReference>
<dbReference type="GO" id="GO:0004070">
    <property type="term" value="F:aspartate carbamoyltransferase activity"/>
    <property type="evidence" value="ECO:0000250"/>
    <property type="project" value="BHF-UCL"/>
</dbReference>
<dbReference type="GO" id="GO:0005524">
    <property type="term" value="F:ATP binding"/>
    <property type="evidence" value="ECO:0000250"/>
    <property type="project" value="BHF-UCL"/>
</dbReference>
<dbReference type="GO" id="GO:0004087">
    <property type="term" value="F:carbamoyl-phosphate synthase (ammonia) activity"/>
    <property type="evidence" value="ECO:0007669"/>
    <property type="project" value="RHEA"/>
</dbReference>
<dbReference type="GO" id="GO:0004088">
    <property type="term" value="F:carbamoyl-phosphate synthase (glutamine-hydrolyzing) activity"/>
    <property type="evidence" value="ECO:0000250"/>
    <property type="project" value="BHF-UCL"/>
</dbReference>
<dbReference type="GO" id="GO:0004151">
    <property type="term" value="F:dihydroorotase activity"/>
    <property type="evidence" value="ECO:0000314"/>
    <property type="project" value="UniProtKB"/>
</dbReference>
<dbReference type="GO" id="GO:0019899">
    <property type="term" value="F:enzyme binding"/>
    <property type="evidence" value="ECO:0000353"/>
    <property type="project" value="UniProtKB"/>
</dbReference>
<dbReference type="GO" id="GO:0004359">
    <property type="term" value="F:glutaminase activity"/>
    <property type="evidence" value="ECO:0007669"/>
    <property type="project" value="RHEA"/>
</dbReference>
<dbReference type="GO" id="GO:0042802">
    <property type="term" value="F:identical protein binding"/>
    <property type="evidence" value="ECO:0000353"/>
    <property type="project" value="IntAct"/>
</dbReference>
<dbReference type="GO" id="GO:0004672">
    <property type="term" value="F:protein kinase activity"/>
    <property type="evidence" value="ECO:0000250"/>
    <property type="project" value="BHF-UCL"/>
</dbReference>
<dbReference type="GO" id="GO:0008270">
    <property type="term" value="F:zinc ion binding"/>
    <property type="evidence" value="ECO:0000314"/>
    <property type="project" value="UniProtKB"/>
</dbReference>
<dbReference type="GO" id="GO:0006207">
    <property type="term" value="P:'de novo' pyrimidine nucleobase biosynthetic process"/>
    <property type="evidence" value="ECO:0000314"/>
    <property type="project" value="UniProtKB"/>
</dbReference>
<dbReference type="GO" id="GO:0044205">
    <property type="term" value="P:'de novo' UMP biosynthetic process"/>
    <property type="evidence" value="ECO:0000314"/>
    <property type="project" value="MGI"/>
</dbReference>
<dbReference type="GO" id="GO:0031100">
    <property type="term" value="P:animal organ regeneration"/>
    <property type="evidence" value="ECO:0007669"/>
    <property type="project" value="Ensembl"/>
</dbReference>
<dbReference type="GO" id="GO:0071364">
    <property type="term" value="P:cellular response to epidermal growth factor stimulus"/>
    <property type="evidence" value="ECO:0007669"/>
    <property type="project" value="Ensembl"/>
</dbReference>
<dbReference type="GO" id="GO:0019240">
    <property type="term" value="P:citrulline biosynthetic process"/>
    <property type="evidence" value="ECO:0007669"/>
    <property type="project" value="Ensembl"/>
</dbReference>
<dbReference type="GO" id="GO:0007565">
    <property type="term" value="P:female pregnancy"/>
    <property type="evidence" value="ECO:0007669"/>
    <property type="project" value="Ensembl"/>
</dbReference>
<dbReference type="GO" id="GO:0006541">
    <property type="term" value="P:glutamine metabolic process"/>
    <property type="evidence" value="ECO:0000250"/>
    <property type="project" value="BHF-UCL"/>
</dbReference>
<dbReference type="GO" id="GO:0007507">
    <property type="term" value="P:heart development"/>
    <property type="evidence" value="ECO:0007669"/>
    <property type="project" value="Ensembl"/>
</dbReference>
<dbReference type="GO" id="GO:0007595">
    <property type="term" value="P:lactation"/>
    <property type="evidence" value="ECO:0007669"/>
    <property type="project" value="Ensembl"/>
</dbReference>
<dbReference type="GO" id="GO:0001889">
    <property type="term" value="P:liver development"/>
    <property type="evidence" value="ECO:0007669"/>
    <property type="project" value="Ensembl"/>
</dbReference>
<dbReference type="GO" id="GO:0014075">
    <property type="term" value="P:response to amine"/>
    <property type="evidence" value="ECO:0007669"/>
    <property type="project" value="Ensembl"/>
</dbReference>
<dbReference type="GO" id="GO:0031000">
    <property type="term" value="P:response to caffeine"/>
    <property type="evidence" value="ECO:0007669"/>
    <property type="project" value="Ensembl"/>
</dbReference>
<dbReference type="GO" id="GO:0051414">
    <property type="term" value="P:response to cortisol"/>
    <property type="evidence" value="ECO:0007669"/>
    <property type="project" value="Ensembl"/>
</dbReference>
<dbReference type="GO" id="GO:0032868">
    <property type="term" value="P:response to insulin"/>
    <property type="evidence" value="ECO:0007669"/>
    <property type="project" value="Ensembl"/>
</dbReference>
<dbReference type="GO" id="GO:0042594">
    <property type="term" value="P:response to starvation"/>
    <property type="evidence" value="ECO:0007669"/>
    <property type="project" value="Ensembl"/>
</dbReference>
<dbReference type="GO" id="GO:0033574">
    <property type="term" value="P:response to testosterone"/>
    <property type="evidence" value="ECO:0007669"/>
    <property type="project" value="Ensembl"/>
</dbReference>
<dbReference type="GO" id="GO:0006225">
    <property type="term" value="P:UDP biosynthetic process"/>
    <property type="evidence" value="ECO:0000314"/>
    <property type="project" value="MGI"/>
</dbReference>
<dbReference type="GO" id="GO:0006228">
    <property type="term" value="P:UTP biosynthetic process"/>
    <property type="evidence" value="ECO:0007669"/>
    <property type="project" value="Ensembl"/>
</dbReference>
<dbReference type="GO" id="GO:0006805">
    <property type="term" value="P:xenobiotic metabolic process"/>
    <property type="evidence" value="ECO:0007669"/>
    <property type="project" value="Ensembl"/>
</dbReference>
<dbReference type="CDD" id="cd01316">
    <property type="entry name" value="CAD_DHOase"/>
    <property type="match status" value="1"/>
</dbReference>
<dbReference type="CDD" id="cd01744">
    <property type="entry name" value="GATase1_CPSase"/>
    <property type="match status" value="1"/>
</dbReference>
<dbReference type="CDD" id="cd01423">
    <property type="entry name" value="MGS_CPS_I_III"/>
    <property type="match status" value="1"/>
</dbReference>
<dbReference type="FunFam" id="3.40.50.1370:FF:000002">
    <property type="entry name" value="Aspartate carbamoyltransferase 2"/>
    <property type="match status" value="1"/>
</dbReference>
<dbReference type="FunFam" id="3.20.20.140:FF:000015">
    <property type="entry name" value="CAD protein isoform X2"/>
    <property type="match status" value="1"/>
</dbReference>
<dbReference type="FunFam" id="3.40.50.1370:FF:000005">
    <property type="entry name" value="CAD protein-like isoform X1"/>
    <property type="match status" value="1"/>
</dbReference>
<dbReference type="FunFam" id="3.40.50.1380:FF:000005">
    <property type="entry name" value="CAD protein-like isoform X1"/>
    <property type="match status" value="1"/>
</dbReference>
<dbReference type="FunFam" id="3.40.50.20:FF:000011">
    <property type="entry name" value="CAD protein-like isoform X1"/>
    <property type="match status" value="1"/>
</dbReference>
<dbReference type="FunFam" id="3.30.470.20:FF:000004">
    <property type="entry name" value="Carbamoyl-phosphate synthase (glutamine-hydrolyzing)"/>
    <property type="match status" value="1"/>
</dbReference>
<dbReference type="FunFam" id="3.40.50.880:FF:000006">
    <property type="entry name" value="Carbamoyl-phosphate synthase 1, mitochondrial"/>
    <property type="match status" value="1"/>
</dbReference>
<dbReference type="FunFam" id="3.50.30.20:FF:000002">
    <property type="entry name" value="Carbamoyl-phosphate synthase 1, mitochondrial"/>
    <property type="match status" value="1"/>
</dbReference>
<dbReference type="FunFam" id="1.10.1030.10:FF:000001">
    <property type="entry name" value="Carbamoyl-phosphate synthase large chain"/>
    <property type="match status" value="1"/>
</dbReference>
<dbReference type="FunFam" id="3.30.1490.20:FF:000001">
    <property type="entry name" value="Carbamoyl-phosphate synthase large chain"/>
    <property type="match status" value="1"/>
</dbReference>
<dbReference type="FunFam" id="3.30.470.20:FF:000001">
    <property type="entry name" value="Carbamoyl-phosphate synthase large chain"/>
    <property type="match status" value="1"/>
</dbReference>
<dbReference type="FunFam" id="3.40.50.20:FF:000002">
    <property type="entry name" value="Carbamoyl-phosphate synthase large chain"/>
    <property type="match status" value="1"/>
</dbReference>
<dbReference type="Gene3D" id="3.40.50.20">
    <property type="match status" value="2"/>
</dbReference>
<dbReference type="Gene3D" id="3.40.50.880">
    <property type="match status" value="1"/>
</dbReference>
<dbReference type="Gene3D" id="3.40.50.1370">
    <property type="entry name" value="Aspartate/ornithine carbamoyltransferase"/>
    <property type="match status" value="2"/>
</dbReference>
<dbReference type="Gene3D" id="3.30.1490.20">
    <property type="entry name" value="ATP-grasp fold, A domain"/>
    <property type="match status" value="1"/>
</dbReference>
<dbReference type="Gene3D" id="3.30.470.20">
    <property type="entry name" value="ATP-grasp fold, B domain"/>
    <property type="match status" value="2"/>
</dbReference>
<dbReference type="Gene3D" id="3.50.30.20">
    <property type="entry name" value="Carbamoyl-phosphate synthase small subunit, N-terminal domain"/>
    <property type="match status" value="1"/>
</dbReference>
<dbReference type="Gene3D" id="1.10.1030.10">
    <property type="entry name" value="Carbamoyl-phosphate synthetase, large subunit oligomerisation domain"/>
    <property type="match status" value="1"/>
</dbReference>
<dbReference type="Gene3D" id="3.20.20.140">
    <property type="entry name" value="Metal-dependent hydrolases"/>
    <property type="match status" value="1"/>
</dbReference>
<dbReference type="Gene3D" id="3.40.50.1380">
    <property type="entry name" value="Methylglyoxal synthase-like domain"/>
    <property type="match status" value="1"/>
</dbReference>
<dbReference type="HAMAP" id="MF_00001">
    <property type="entry name" value="Asp_carb_tr"/>
    <property type="match status" value="1"/>
</dbReference>
<dbReference type="HAMAP" id="MF_01209">
    <property type="entry name" value="CPSase_S_chain"/>
    <property type="match status" value="1"/>
</dbReference>
<dbReference type="InterPro" id="IPR006680">
    <property type="entry name" value="Amidohydro-rel"/>
</dbReference>
<dbReference type="InterPro" id="IPR006132">
    <property type="entry name" value="Asp/Orn_carbamoyltranf_P-bd"/>
</dbReference>
<dbReference type="InterPro" id="IPR006130">
    <property type="entry name" value="Asp/Orn_carbamoylTrfase"/>
</dbReference>
<dbReference type="InterPro" id="IPR036901">
    <property type="entry name" value="Asp/Orn_carbamoylTrfase_sf"/>
</dbReference>
<dbReference type="InterPro" id="IPR002082">
    <property type="entry name" value="Asp_carbamoyltransf"/>
</dbReference>
<dbReference type="InterPro" id="IPR006131">
    <property type="entry name" value="Asp_carbamoyltransf_Asp/Orn-bd"/>
</dbReference>
<dbReference type="InterPro" id="IPR011761">
    <property type="entry name" value="ATP-grasp"/>
</dbReference>
<dbReference type="InterPro" id="IPR013815">
    <property type="entry name" value="ATP_grasp_subdomain_1"/>
</dbReference>
<dbReference type="InterPro" id="IPR006275">
    <property type="entry name" value="CarbamoylP_synth_lsu"/>
</dbReference>
<dbReference type="InterPro" id="IPR005480">
    <property type="entry name" value="CarbamoylP_synth_lsu_oligo"/>
</dbReference>
<dbReference type="InterPro" id="IPR036897">
    <property type="entry name" value="CarbamoylP_synth_lsu_oligo_sf"/>
</dbReference>
<dbReference type="InterPro" id="IPR006274">
    <property type="entry name" value="CarbamoylP_synth_ssu"/>
</dbReference>
<dbReference type="InterPro" id="IPR002474">
    <property type="entry name" value="CarbamoylP_synth_ssu_N"/>
</dbReference>
<dbReference type="InterPro" id="IPR036480">
    <property type="entry name" value="CarbP_synth_ssu_N_sf"/>
</dbReference>
<dbReference type="InterPro" id="IPR005479">
    <property type="entry name" value="CbamoylP_synth_lsu-like_ATP-bd"/>
</dbReference>
<dbReference type="InterPro" id="IPR005483">
    <property type="entry name" value="CbamoylP_synth_lsu_CPSase_dom"/>
</dbReference>
<dbReference type="InterPro" id="IPR029062">
    <property type="entry name" value="Class_I_gatase-like"/>
</dbReference>
<dbReference type="InterPro" id="IPR035686">
    <property type="entry name" value="CPSase_GATase1"/>
</dbReference>
<dbReference type="InterPro" id="IPR002195">
    <property type="entry name" value="Dihydroorotase_CS"/>
</dbReference>
<dbReference type="InterPro" id="IPR017926">
    <property type="entry name" value="GATASE"/>
</dbReference>
<dbReference type="InterPro" id="IPR011059">
    <property type="entry name" value="Metal-dep_hydrolase_composite"/>
</dbReference>
<dbReference type="InterPro" id="IPR032466">
    <property type="entry name" value="Metal_Hydrolase"/>
</dbReference>
<dbReference type="InterPro" id="IPR011607">
    <property type="entry name" value="MGS-like_dom"/>
</dbReference>
<dbReference type="InterPro" id="IPR036914">
    <property type="entry name" value="MGS-like_dom_sf"/>
</dbReference>
<dbReference type="InterPro" id="IPR016185">
    <property type="entry name" value="PreATP-grasp_dom_sf"/>
</dbReference>
<dbReference type="NCBIfam" id="TIGR00670">
    <property type="entry name" value="asp_carb_tr"/>
    <property type="match status" value="1"/>
</dbReference>
<dbReference type="NCBIfam" id="TIGR01369">
    <property type="entry name" value="CPSaseII_lrg"/>
    <property type="match status" value="1"/>
</dbReference>
<dbReference type="NCBIfam" id="TIGR01368">
    <property type="entry name" value="CPSaseIIsmall"/>
    <property type="match status" value="1"/>
</dbReference>
<dbReference type="NCBIfam" id="NF002032">
    <property type="entry name" value="PRK00856.1"/>
    <property type="match status" value="1"/>
</dbReference>
<dbReference type="NCBIfam" id="NF003671">
    <property type="entry name" value="PRK05294.1"/>
    <property type="match status" value="1"/>
</dbReference>
<dbReference type="NCBIfam" id="NF009455">
    <property type="entry name" value="PRK12815.1"/>
    <property type="match status" value="1"/>
</dbReference>
<dbReference type="NCBIfam" id="NF009475">
    <property type="entry name" value="PRK12838.1"/>
    <property type="match status" value="1"/>
</dbReference>
<dbReference type="PANTHER" id="PTHR11405:SF5">
    <property type="entry name" value="CAD PROTEIN"/>
    <property type="match status" value="1"/>
</dbReference>
<dbReference type="PANTHER" id="PTHR11405">
    <property type="entry name" value="CARBAMOYLTRANSFERASE FAMILY MEMBER"/>
    <property type="match status" value="1"/>
</dbReference>
<dbReference type="Pfam" id="PF01979">
    <property type="entry name" value="Amidohydro_1"/>
    <property type="match status" value="1"/>
</dbReference>
<dbReference type="Pfam" id="PF02786">
    <property type="entry name" value="CPSase_L_D2"/>
    <property type="match status" value="2"/>
</dbReference>
<dbReference type="Pfam" id="PF02787">
    <property type="entry name" value="CPSase_L_D3"/>
    <property type="match status" value="1"/>
</dbReference>
<dbReference type="Pfam" id="PF00988">
    <property type="entry name" value="CPSase_sm_chain"/>
    <property type="match status" value="1"/>
</dbReference>
<dbReference type="Pfam" id="PF00117">
    <property type="entry name" value="GATase"/>
    <property type="match status" value="1"/>
</dbReference>
<dbReference type="Pfam" id="PF02142">
    <property type="entry name" value="MGS"/>
    <property type="match status" value="1"/>
</dbReference>
<dbReference type="Pfam" id="PF00185">
    <property type="entry name" value="OTCace"/>
    <property type="match status" value="1"/>
</dbReference>
<dbReference type="Pfam" id="PF02729">
    <property type="entry name" value="OTCace_N"/>
    <property type="match status" value="1"/>
</dbReference>
<dbReference type="PRINTS" id="PR00100">
    <property type="entry name" value="AOTCASE"/>
</dbReference>
<dbReference type="PRINTS" id="PR00101">
    <property type="entry name" value="ATCASE"/>
</dbReference>
<dbReference type="PRINTS" id="PR00098">
    <property type="entry name" value="CPSASE"/>
</dbReference>
<dbReference type="PRINTS" id="PR00099">
    <property type="entry name" value="CPSGATASE"/>
</dbReference>
<dbReference type="SMART" id="SM01096">
    <property type="entry name" value="CPSase_L_D3"/>
    <property type="match status" value="1"/>
</dbReference>
<dbReference type="SMART" id="SM01097">
    <property type="entry name" value="CPSase_sm_chain"/>
    <property type="match status" value="1"/>
</dbReference>
<dbReference type="SMART" id="SM00851">
    <property type="entry name" value="MGS"/>
    <property type="match status" value="1"/>
</dbReference>
<dbReference type="SUPFAM" id="SSF53671">
    <property type="entry name" value="Aspartate/ornithine carbamoyltransferase"/>
    <property type="match status" value="1"/>
</dbReference>
<dbReference type="SUPFAM" id="SSF48108">
    <property type="entry name" value="Carbamoyl phosphate synthetase, large subunit connection domain"/>
    <property type="match status" value="1"/>
</dbReference>
<dbReference type="SUPFAM" id="SSF52021">
    <property type="entry name" value="Carbamoyl phosphate synthetase, small subunit N-terminal domain"/>
    <property type="match status" value="1"/>
</dbReference>
<dbReference type="SUPFAM" id="SSF52317">
    <property type="entry name" value="Class I glutamine amidotransferase-like"/>
    <property type="match status" value="1"/>
</dbReference>
<dbReference type="SUPFAM" id="SSF51338">
    <property type="entry name" value="Composite domain of metallo-dependent hydrolases"/>
    <property type="match status" value="1"/>
</dbReference>
<dbReference type="SUPFAM" id="SSF56059">
    <property type="entry name" value="Glutathione synthetase ATP-binding domain-like"/>
    <property type="match status" value="2"/>
</dbReference>
<dbReference type="SUPFAM" id="SSF51556">
    <property type="entry name" value="Metallo-dependent hydrolases"/>
    <property type="match status" value="1"/>
</dbReference>
<dbReference type="SUPFAM" id="SSF52335">
    <property type="entry name" value="Methylglyoxal synthase-like"/>
    <property type="match status" value="1"/>
</dbReference>
<dbReference type="SUPFAM" id="SSF52440">
    <property type="entry name" value="PreATP-grasp domain"/>
    <property type="match status" value="2"/>
</dbReference>
<dbReference type="PROSITE" id="PS50975">
    <property type="entry name" value="ATP_GRASP"/>
    <property type="match status" value="2"/>
</dbReference>
<dbReference type="PROSITE" id="PS00097">
    <property type="entry name" value="CARBAMOYLTRANSFERASE"/>
    <property type="match status" value="1"/>
</dbReference>
<dbReference type="PROSITE" id="PS00866">
    <property type="entry name" value="CPSASE_1"/>
    <property type="match status" value="2"/>
</dbReference>
<dbReference type="PROSITE" id="PS00867">
    <property type="entry name" value="CPSASE_2"/>
    <property type="match status" value="2"/>
</dbReference>
<dbReference type="PROSITE" id="PS00482">
    <property type="entry name" value="DIHYDROOROTASE_1"/>
    <property type="match status" value="1"/>
</dbReference>
<dbReference type="PROSITE" id="PS00483">
    <property type="entry name" value="DIHYDROOROTASE_2"/>
    <property type="match status" value="1"/>
</dbReference>
<dbReference type="PROSITE" id="PS51273">
    <property type="entry name" value="GATASE_TYPE_1"/>
    <property type="match status" value="1"/>
</dbReference>
<dbReference type="PROSITE" id="PS51855">
    <property type="entry name" value="MGS"/>
    <property type="match status" value="1"/>
</dbReference>
<sequence length="2225" mass="242984">MAALVLEDGSVLRGQPFGAAVSTAGEVVFQTGMVGYPEALTDPSYKAQILVLTYPLIGNYGIPPDEMDEFGLCKWFESSGIHVAALVVGECCPTPSHWSATRTLHEWLQQHGIPGLQGVDTRELTKKLREQGSLLGKLVQNGTEPSSLPFLDPNARPLVPEVSIKTPRVFNTGGAPRILALDCGLKYNQIRCLCQRGAEVTVVPWDHALDSQEYEGLFLSNGPGDPASYPSVVSTLSRVLSEPNPRPVFGICLGHQLLALAIGAKTYKMRYGNRGHNQPCLLVGSGRCFLTSQNHGFAVETDSLPADWAPLFTNANDGSNEGIVHNSLPFFSVQFHPEHQAGPSDMELLFDIFLETVKEATAGNPGGQTVRERLTERLCPPGIPTPGSGLPPPRKVLILGSGGLSIGQAGEFDYSGSQAIKALKEENIQTLLINPNIATVQTSQGLADKVYFLPITPHYVTQVIRNERPDGVLLTFGGQTALNCGVELTKAGVLARYGVRVLGTPVETIELTEDRRAFAARMAEIGEHVAPSEAANSLEQAQAAAERLGYPVLVRAAFALGGLGSGFASNREELSALVAPAFAHTSQVLVDKSLKGWKEIEYEVVRDAYGNCVTVCNMENLDPLGIHTGESIVVAPSQTLNDREYQLLRQTAIKVTQHLGIVGECNVQYALNPESEQYYIIEVNARLSRSSALASKATGYPLAYVAAKLALGIPLPELRNSVTGGTAAFEPSVDYCVVKIPRWDLSKFLRVSTKIGSCMKSVGEVMGIGRSFEEAFQKALRMVDENCVGFDHTVKPVSDMELETPTDKRIFVVAAALWAGYSVDRLYELTRIDRWFLHRMKRIIAHAQLLEQHRGQPLPPDLLQQAKCLGFSDKQIALAVLSTELAVRKLRQELGICPAVKQIDTVAAEWPAQTNYLYLTYWGTTHDLTFRTPHVLVLGSGVYRIGSSVEFDWCAVGCIQQLRKMGYKTIMVNYNPETVSTDYDMCDRLYFDEISFEVVMDIYELENPEGVILSMGGQLPNNMAMALHRQQCRVLGTSPEAIDSAENRFKFSRLLDTIGISQPQWRELSDLESARQFCQTVGYPCVVRPSYVLSGAAMNVAYTDGDLERFLSSAAAVSKEHPVVISKFIQEAKEIDVDAVASDGVVAAIAISEHVENAGVHSGDATLVTPPQDITAKTLERIKAIVHAVGQELQVTGPFNLQLIAKDDQLKVIECNVRVSRSFPFVSKTLGVDLVALATRVIMGEEVEPVGLMTGSGVVGVKVPQFSFSRLAGADVVLGVEMTSTGEVAGFGESRCEAYLKAMLSTGFKIPKKNILLTIGSYKNKSELLPTVRLLESLGYSLYASLGTADFYTEHGVKVTAVDWHFEEAVDGECPPQRSILEQLAEKNFELVINLSMRGAGGRRLSSFVTKGYRTRRLAADFSVPLIIDIKCTKLFVEALGQIGPAPPLKVHVDCMTSQKLVRLPGLIDVHVHLREPGGTHKEDFASGTAAALAGGITMVCAMPNTRPPIIDAPALALAQKLAEAGARCDFALFLGASSENAGTLGTVAGSAAGLKLYLNETFSELRLDSVVQWMEHFETWPSHLPIVAHAEQQTVAAVLMVAQLTQRSVHICHVARKEEILLIKAAKARGLPVTCEVAPHHLFLSHDDLERLGPGKGEVRPELGSRQDVEALWENMAVIDCFASDHAPHTLEEKCGSRPPPGFPGLETMLPLLLTAVSEGRLSLDDLLQRLHHNPRRIFHLPPQEDTYVEVDLEHEWTIPSHMPFSKAHWTPFEGQKVKGTVRRVVLRGEVAYIDGQVLVPPGYGQDVRKWPQGAVPQLPPSAPATSEMTTTPERPRRGIPGLPDGRFHLPPRIHRASDPGLPAEEPKEKSSRKVAEPELMGTPDGTCYPPPPVPRQASPQNLGTPGLLHPQTSPLLHSLVGQHILSVQQFTKDQMSHLFNVAHTLRMMVQKERSLDILKGKVMASMFYEVSTRTSSSFAAAMARLGGAVLSFSEATSSVQKGESLADSVQTMSCYADVVVLRHPQPGAVELAAKHCRRPVINAGDGVGEHPTQALLDIFTIREELGTVNGMTITMVGDLKHGRTVHSLACLLTQYRVSLRYVAPPSLRMPPTVRAFVASRGTKQEEFESIEEALPDTDVLYMTRIQKERFGSTQEYEACFGQFILTPHIMTRAKKKMVVMHPMPRVNEISVEVDSDPRAAYFRQAENGMYIRMALLATVLGRF</sequence>
<evidence type="ECO:0000250" key="1">
    <source>
        <dbReference type="UniProtKB" id="P00968"/>
    </source>
</evidence>
<evidence type="ECO:0000250" key="2">
    <source>
        <dbReference type="UniProtKB" id="P05020"/>
    </source>
</evidence>
<evidence type="ECO:0000250" key="3">
    <source>
        <dbReference type="UniProtKB" id="P07259"/>
    </source>
</evidence>
<evidence type="ECO:0000250" key="4">
    <source>
        <dbReference type="UniProtKB" id="P08955"/>
    </source>
</evidence>
<evidence type="ECO:0000250" key="5">
    <source>
        <dbReference type="UniProtKB" id="P0A6F1"/>
    </source>
</evidence>
<evidence type="ECO:0000250" key="6">
    <source>
        <dbReference type="UniProtKB" id="P0A786"/>
    </source>
</evidence>
<evidence type="ECO:0000255" key="7">
    <source>
        <dbReference type="PROSITE-ProRule" id="PRU00409"/>
    </source>
</evidence>
<evidence type="ECO:0000255" key="8">
    <source>
        <dbReference type="PROSITE-ProRule" id="PRU00605"/>
    </source>
</evidence>
<evidence type="ECO:0000255" key="9">
    <source>
        <dbReference type="PROSITE-ProRule" id="PRU01202"/>
    </source>
</evidence>
<evidence type="ECO:0000256" key="10">
    <source>
        <dbReference type="SAM" id="MobiDB-lite"/>
    </source>
</evidence>
<evidence type="ECO:0000269" key="11">
    <source>
    </source>
</evidence>
<evidence type="ECO:0000269" key="12">
    <source>
    </source>
</evidence>
<evidence type="ECO:0000269" key="13">
    <source>
    </source>
</evidence>
<evidence type="ECO:0000269" key="14">
    <source>
    </source>
</evidence>
<evidence type="ECO:0000269" key="15">
    <source>
    </source>
</evidence>
<evidence type="ECO:0000269" key="16">
    <source>
    </source>
</evidence>
<evidence type="ECO:0000269" key="17">
    <source>
    </source>
</evidence>
<evidence type="ECO:0000269" key="18">
    <source>
    </source>
</evidence>
<evidence type="ECO:0000269" key="19">
    <source>
    </source>
</evidence>
<evidence type="ECO:0000269" key="20">
    <source>
    </source>
</evidence>
<evidence type="ECO:0000269" key="21">
    <source>
    </source>
</evidence>
<evidence type="ECO:0000269" key="22">
    <source>
    </source>
</evidence>
<evidence type="ECO:0000269" key="23">
    <source ref="4"/>
</evidence>
<evidence type="ECO:0000305" key="24"/>
<evidence type="ECO:0000312" key="25">
    <source>
        <dbReference type="HGNC" id="HGNC:1424"/>
    </source>
</evidence>
<evidence type="ECO:0007744" key="26">
    <source>
        <dbReference type="PDB" id="4C6D"/>
    </source>
</evidence>
<evidence type="ECO:0007744" key="27">
    <source>
        <dbReference type="PDB" id="4C6Q"/>
    </source>
</evidence>
<evidence type="ECO:0007744" key="28">
    <source>
        <dbReference type="PDB" id="5G1N"/>
    </source>
</evidence>
<evidence type="ECO:0007744" key="29">
    <source>
        <dbReference type="PDB" id="5G1O"/>
    </source>
</evidence>
<evidence type="ECO:0007744" key="30">
    <source>
        <dbReference type="PDB" id="5G1P"/>
    </source>
</evidence>
<evidence type="ECO:0007744" key="31">
    <source>
        <dbReference type="PDB" id="5YNZ"/>
    </source>
</evidence>
<evidence type="ECO:0007744" key="32">
    <source>
    </source>
</evidence>
<evidence type="ECO:0007744" key="33">
    <source>
    </source>
</evidence>
<evidence type="ECO:0007744" key="34">
    <source>
    </source>
</evidence>
<evidence type="ECO:0007744" key="35">
    <source>
    </source>
</evidence>
<evidence type="ECO:0007744" key="36">
    <source>
    </source>
</evidence>
<evidence type="ECO:0007744" key="37">
    <source>
    </source>
</evidence>
<evidence type="ECO:0007744" key="38">
    <source>
    </source>
</evidence>
<evidence type="ECO:0007744" key="39">
    <source>
    </source>
</evidence>
<evidence type="ECO:0007744" key="40">
    <source>
    </source>
</evidence>
<evidence type="ECO:0007744" key="41">
    <source>
    </source>
</evidence>
<evidence type="ECO:0007744" key="42">
    <source>
    </source>
</evidence>
<evidence type="ECO:0007744" key="43">
    <source>
    </source>
</evidence>
<evidence type="ECO:0007829" key="44">
    <source>
        <dbReference type="PDB" id="5G1N"/>
    </source>
</evidence>
<evidence type="ECO:0007829" key="45">
    <source>
        <dbReference type="PDB" id="5G1O"/>
    </source>
</evidence>
<evidence type="ECO:0007829" key="46">
    <source>
        <dbReference type="PDB" id="5G1P"/>
    </source>
</evidence>
<evidence type="ECO:0007829" key="47">
    <source>
        <dbReference type="PDB" id="5YNZ"/>
    </source>
</evidence>
<evidence type="ECO:0007829" key="48">
    <source>
        <dbReference type="PDB" id="6HFQ"/>
    </source>
</evidence>
<evidence type="ECO:0007829" key="49">
    <source>
        <dbReference type="PDB" id="8PBS"/>
    </source>
</evidence>
<evidence type="ECO:0007829" key="50">
    <source>
        <dbReference type="PDB" id="9FS2"/>
    </source>
</evidence>
<proteinExistence type="evidence at protein level"/>
<reference key="1">
    <citation type="journal article" date="1996" name="Biochem. Biophys. Res. Commun.">
        <title>Molecular cloning of a human cDNA encoding a trifunctional enzyme of carbamoyl-phosphate synthetase-aspartate transcarbamoylase-dihydroorotase in de Novo pyrimidine synthesis.</title>
        <authorList>
            <person name="Iwahana H."/>
            <person name="Fujimura M."/>
            <person name="Ii S."/>
            <person name="Kondo M."/>
            <person name="Moritani M."/>
            <person name="Takahashi Y."/>
            <person name="Yamaoka T."/>
            <person name="Yoshimoto K."/>
            <person name="Itakura M."/>
        </authorList>
    </citation>
    <scope>NUCLEOTIDE SEQUENCE [MRNA]</scope>
    <source>
        <tissue>Fetal lung fibroblast</tissue>
    </source>
</reference>
<reference key="2">
    <citation type="submission" date="2005-09" db="EMBL/GenBank/DDBJ databases">
        <authorList>
            <person name="Mural R.J."/>
            <person name="Istrail S."/>
            <person name="Sutton G.G."/>
            <person name="Florea L."/>
            <person name="Halpern A.L."/>
            <person name="Mobarry C.M."/>
            <person name="Lippert R."/>
            <person name="Walenz B."/>
            <person name="Shatkay H."/>
            <person name="Dew I."/>
            <person name="Miller J.R."/>
            <person name="Flanigan M.J."/>
            <person name="Edwards N.J."/>
            <person name="Bolanos R."/>
            <person name="Fasulo D."/>
            <person name="Halldorsson B.V."/>
            <person name="Hannenhalli S."/>
            <person name="Turner R."/>
            <person name="Yooseph S."/>
            <person name="Lu F."/>
            <person name="Nusskern D.R."/>
            <person name="Shue B.C."/>
            <person name="Zheng X.H."/>
            <person name="Zhong F."/>
            <person name="Delcher A.L."/>
            <person name="Huson D.H."/>
            <person name="Kravitz S.A."/>
            <person name="Mouchard L."/>
            <person name="Reinert K."/>
            <person name="Remington K.A."/>
            <person name="Clark A.G."/>
            <person name="Waterman M.S."/>
            <person name="Eichler E.E."/>
            <person name="Adams M.D."/>
            <person name="Hunkapiller M.W."/>
            <person name="Myers E.W."/>
            <person name="Venter J.C."/>
        </authorList>
    </citation>
    <scope>NUCLEOTIDE SEQUENCE [LARGE SCALE GENOMIC DNA]</scope>
</reference>
<reference key="3">
    <citation type="journal article" date="2004" name="Genome Res.">
        <title>The status, quality, and expansion of the NIH full-length cDNA project: the Mammalian Gene Collection (MGC).</title>
        <authorList>
            <consortium name="The MGC Project Team"/>
        </authorList>
    </citation>
    <scope>NUCLEOTIDE SEQUENCE [LARGE SCALE MRNA]</scope>
    <source>
        <tissue>Eye</tissue>
    </source>
</reference>
<reference key="4">
    <citation type="submission" date="2008-02" db="UniProtKB">
        <authorList>
            <person name="Bienvenut W.V."/>
            <person name="Dhillon A.S."/>
            <person name="Matallanas D."/>
            <person name="Murray L."/>
            <person name="Brunton V.G."/>
            <person name="Cooper W.N."/>
            <person name="Boldt K."/>
            <person name="von Kriegsheim A.F."/>
            <person name="Kolch W."/>
            <person name="Frame M.C."/>
        </authorList>
    </citation>
    <scope>PROTEIN SEQUENCE OF 2-13; 157-165; 169-177; 359-371; 501-516; 548-555; 599-606; 697-719; 761-778; 843-854; 932-944; 1034-1048; 1067-1075; 1110-1127; 1229-1240; 1263-1270; 1313-1323; 1326-1333; 1658-1667; 1723-1731; 1840-1848; 1976-1986; 2025-2036; 2103-2110; 2179-2187 AND 2215-2225</scope>
    <scope>CLEAVAGE OF INITIATOR METHIONINE</scope>
    <scope>ACETYLATION AT ALA-2</scope>
    <scope>IDENTIFICATION BY MASS SPECTROMETRY</scope>
    <source>
        <tissue>Colon adenocarcinoma</tissue>
        <tissue>Hepatoma</tissue>
    </source>
</reference>
<reference key="5">
    <citation type="journal article" date="1990" name="DNA Cell Biol.">
        <title>Organization and nucleotide sequence of the 3' end of the human CAD gene.</title>
        <authorList>
            <person name="Davidson J.N."/>
            <person name="Rao G.N."/>
            <person name="Niswander L."/>
            <person name="Andreano C."/>
            <person name="Tamer C."/>
            <person name="Chen K.C."/>
        </authorList>
    </citation>
    <scope>NUCLEOTIDE SEQUENCE [GENOMIC DNA] OF 1752-2225</scope>
</reference>
<reference key="6">
    <citation type="journal article" date="1995" name="Biochemistry">
        <title>Function of conserved histidine residues in mammalian dihydroorotase.</title>
        <authorList>
            <person name="Zimmermann B.H."/>
            <person name="Kemling N.M."/>
            <person name="Evans D.R."/>
        </authorList>
    </citation>
    <scope>MUTAGENESIS OF HIS-1471; HIS-1473; ASP-1512; HIS-1590; HIS-1642 AND HIS-1690</scope>
    <scope>COFACTOR</scope>
    <scope>ZINC-BINDING SITES</scope>
</reference>
<reference key="7">
    <citation type="journal article" date="2002" name="J. Biol. Chem.">
        <title>Growth-dependent regulation of mammalian pyrimidine biosynthesis by the protein kinase A and MAPK signaling cascades.</title>
        <authorList>
            <person name="Sigoillot F.D."/>
            <person name="Evans D.R."/>
            <person name="Guy H.I."/>
        </authorList>
    </citation>
    <scope>ACTIVITY REGULATION</scope>
</reference>
<reference key="8">
    <citation type="journal article" date="2005" name="J. Biol. Chem.">
        <title>Nuclear localization and mitogen-activated protein kinase phosphorylation of the multifunctional protein CAD.</title>
        <authorList>
            <person name="Sigoillot F.D."/>
            <person name="Kotsis D.H."/>
            <person name="Serre V."/>
            <person name="Sigoillot S.M."/>
            <person name="Evans D.R."/>
            <person name="Guy H.I."/>
        </authorList>
    </citation>
    <scope>SUBCELLULAR LOCATION</scope>
</reference>
<reference key="9">
    <citation type="journal article" date="2005" name="Nucleic Acids Res.">
        <title>Transcriptional repression of human cad gene by hypoxia inducible factor-1alpha.</title>
        <authorList>
            <person name="Chen K.F."/>
            <person name="Lai Y.Y."/>
            <person name="Sun H.S."/>
            <person name="Tsai S.J."/>
        </authorList>
    </citation>
    <scope>INDUCTION</scope>
</reference>
<reference key="10">
    <citation type="journal article" date="2006" name="Cell">
        <title>Global, in vivo, and site-specific phosphorylation dynamics in signaling networks.</title>
        <authorList>
            <person name="Olsen J.V."/>
            <person name="Blagoev B."/>
            <person name="Gnad F."/>
            <person name="Macek B."/>
            <person name="Kumar C."/>
            <person name="Mortensen P."/>
            <person name="Mann M."/>
        </authorList>
    </citation>
    <scope>PHOSPHORYLATION [LARGE SCALE ANALYSIS] AT SER-1859</scope>
    <scope>IDENTIFICATION BY MASS SPECTROMETRY [LARGE SCALE ANALYSIS]</scope>
    <source>
        <tissue>Cervix carcinoma</tissue>
    </source>
</reference>
<reference key="11">
    <citation type="journal article" date="2006" name="Nat. Biotechnol.">
        <title>A probability-based approach for high-throughput protein phosphorylation analysis and site localization.</title>
        <authorList>
            <person name="Beausoleil S.A."/>
            <person name="Villen J."/>
            <person name="Gerber S.A."/>
            <person name="Rush J."/>
            <person name="Gygi S.P."/>
        </authorList>
    </citation>
    <scope>PHOSPHORYLATION [LARGE SCALE ANALYSIS] AT SER-1859</scope>
    <scope>IDENTIFICATION BY MASS SPECTROMETRY [LARGE SCALE ANALYSIS]</scope>
    <source>
        <tissue>Cervix carcinoma</tissue>
    </source>
</reference>
<reference key="12">
    <citation type="journal article" date="2007" name="Front. Biosci.">
        <title>Protein kinase C modulates the up-regulation of the pyrimidine biosynthetic complex, CAD, by MAP kinase.</title>
        <authorList>
            <person name="Sigoillot F.D."/>
            <person name="Kotsis D.H."/>
            <person name="Masko E.M."/>
            <person name="Bame M."/>
            <person name="Evans D.R."/>
            <person name="Evans H.I."/>
        </authorList>
    </citation>
    <scope>PHOSPHORYLATION AT THR-456; SER-1406; SER-1859 AND SER-1873</scope>
    <scope>MUTAGENESIS OF SER-1873</scope>
</reference>
<reference key="13">
    <citation type="journal article" date="2008" name="Mol. Cell">
        <title>Kinase-selective enrichment enables quantitative phosphoproteomics of the kinome across the cell cycle.</title>
        <authorList>
            <person name="Daub H."/>
            <person name="Olsen J.V."/>
            <person name="Bairlein M."/>
            <person name="Gnad F."/>
            <person name="Oppermann F.S."/>
            <person name="Korner R."/>
            <person name="Greff Z."/>
            <person name="Keri G."/>
            <person name="Stemmann O."/>
            <person name="Mann M."/>
        </authorList>
    </citation>
    <scope>PHOSPHORYLATION [LARGE SCALE ANALYSIS] AT SER-1859 AND THR-1884</scope>
    <scope>IDENTIFICATION BY MASS SPECTROMETRY [LARGE SCALE ANALYSIS]</scope>
    <source>
        <tissue>Cervix carcinoma</tissue>
    </source>
</reference>
<reference key="14">
    <citation type="journal article" date="2008" name="Proc. Natl. Acad. Sci. U.S.A.">
        <title>A quantitative atlas of mitotic phosphorylation.</title>
        <authorList>
            <person name="Dephoure N."/>
            <person name="Zhou C."/>
            <person name="Villen J."/>
            <person name="Beausoleil S.A."/>
            <person name="Bakalarski C.E."/>
            <person name="Elledge S.J."/>
            <person name="Gygi S.P."/>
        </authorList>
    </citation>
    <scope>PHOSPHORYLATION [LARGE SCALE ANALYSIS] AT THR-1884</scope>
    <scope>IDENTIFICATION BY MASS SPECTROMETRY [LARGE SCALE ANALYSIS]</scope>
    <source>
        <tissue>Cervix carcinoma</tissue>
    </source>
</reference>
<reference key="15">
    <citation type="journal article" date="2009" name="Anal. Chem.">
        <title>Lys-N and trypsin cover complementary parts of the phosphoproteome in a refined SCX-based approach.</title>
        <authorList>
            <person name="Gauci S."/>
            <person name="Helbig A.O."/>
            <person name="Slijper M."/>
            <person name="Krijgsveld J."/>
            <person name="Heck A.J."/>
            <person name="Mohammed S."/>
        </authorList>
    </citation>
    <scope>ACETYLATION [LARGE SCALE ANALYSIS] AT ALA-2</scope>
    <scope>CLEAVAGE OF INITIATOR METHIONINE [LARGE SCALE ANALYSIS]</scope>
    <scope>IDENTIFICATION BY MASS SPECTROMETRY [LARGE SCALE ANALYSIS]</scope>
</reference>
<reference key="16">
    <citation type="journal article" date="2009" name="Sci. Signal.">
        <title>Quantitative phosphoproteomic analysis of T cell receptor signaling reveals system-wide modulation of protein-protein interactions.</title>
        <authorList>
            <person name="Mayya V."/>
            <person name="Lundgren D.H."/>
            <person name="Hwang S.-I."/>
            <person name="Rezaul K."/>
            <person name="Wu L."/>
            <person name="Eng J.K."/>
            <person name="Rodionov V."/>
            <person name="Han D.K."/>
        </authorList>
    </citation>
    <scope>IDENTIFICATION BY MASS SPECTROMETRY [LARGE SCALE ANALYSIS]</scope>
    <source>
        <tissue>Leukemic T-cell</tissue>
    </source>
</reference>
<reference key="17">
    <citation type="journal article" date="2009" name="Science">
        <title>Lysine acetylation targets protein complexes and co-regulates major cellular functions.</title>
        <authorList>
            <person name="Choudhary C."/>
            <person name="Kumar C."/>
            <person name="Gnad F."/>
            <person name="Nielsen M.L."/>
            <person name="Rehman M."/>
            <person name="Walther T.C."/>
            <person name="Olsen J.V."/>
            <person name="Mann M."/>
        </authorList>
    </citation>
    <scope>ACETYLATION [LARGE SCALE ANALYSIS] AT LYS-747 AND LYS-1411</scope>
    <scope>IDENTIFICATION BY MASS SPECTROMETRY [LARGE SCALE ANALYSIS]</scope>
</reference>
<reference key="18">
    <citation type="journal article" date="2010" name="Sci. Signal.">
        <title>Quantitative phosphoproteomics reveals widespread full phosphorylation site occupancy during mitosis.</title>
        <authorList>
            <person name="Olsen J.V."/>
            <person name="Vermeulen M."/>
            <person name="Santamaria A."/>
            <person name="Kumar C."/>
            <person name="Miller M.L."/>
            <person name="Jensen L.J."/>
            <person name="Gnad F."/>
            <person name="Cox J."/>
            <person name="Jensen T.S."/>
            <person name="Nigg E.A."/>
            <person name="Brunak S."/>
            <person name="Mann M."/>
        </authorList>
    </citation>
    <scope>PHOSPHORYLATION [LARGE SCALE ANALYSIS] AT SER-1859 AND SER-1900</scope>
    <scope>IDENTIFICATION BY MASS SPECTROMETRY [LARGE SCALE ANALYSIS]</scope>
    <source>
        <tissue>Cervix carcinoma</tissue>
    </source>
</reference>
<reference key="19">
    <citation type="journal article" date="2011" name="BMC Syst. Biol.">
        <title>Initial characterization of the human central proteome.</title>
        <authorList>
            <person name="Burkard T.R."/>
            <person name="Planyavsky M."/>
            <person name="Kaupe I."/>
            <person name="Breitwieser F.P."/>
            <person name="Buerckstuemmer T."/>
            <person name="Bennett K.L."/>
            <person name="Superti-Furga G."/>
            <person name="Colinge J."/>
        </authorList>
    </citation>
    <scope>IDENTIFICATION BY MASS SPECTROMETRY [LARGE SCALE ANALYSIS]</scope>
</reference>
<reference key="20">
    <citation type="journal article" date="2011" name="Sci. Signal.">
        <title>System-wide temporal characterization of the proteome and phosphoproteome of human embryonic stem cell differentiation.</title>
        <authorList>
            <person name="Rigbolt K.T."/>
            <person name="Prokhorova T.A."/>
            <person name="Akimov V."/>
            <person name="Henningsen J."/>
            <person name="Johansen P.T."/>
            <person name="Kratchmarova I."/>
            <person name="Kassem M."/>
            <person name="Mann M."/>
            <person name="Olsen J.V."/>
            <person name="Blagoev B."/>
        </authorList>
    </citation>
    <scope>PHOSPHORYLATION [LARGE SCALE ANALYSIS] AT SER-1406 AND SER-1859</scope>
    <scope>IDENTIFICATION BY MASS SPECTROMETRY [LARGE SCALE ANALYSIS]</scope>
</reference>
<reference key="21">
    <citation type="journal article" date="2012" name="Mol. Cell. Proteomics">
        <title>Comparative large-scale characterisation of plant vs. mammal proteins reveals similar and idiosyncratic N-alpha acetylation features.</title>
        <authorList>
            <person name="Bienvenut W.V."/>
            <person name="Sumpton D."/>
            <person name="Martinez A."/>
            <person name="Lilla S."/>
            <person name="Espagne C."/>
            <person name="Meinnel T."/>
            <person name="Giglione C."/>
        </authorList>
    </citation>
    <scope>ACETYLATION [LARGE SCALE ANALYSIS] AT ALA-2</scope>
    <scope>CLEAVAGE OF INITIATOR METHIONINE [LARGE SCALE ANALYSIS]</scope>
    <scope>IDENTIFICATION BY MASS SPECTROMETRY [LARGE SCALE ANALYSIS]</scope>
</reference>
<reference key="22">
    <citation type="journal article" date="2012" name="Proc. Natl. Acad. Sci. U.S.A.">
        <title>N-terminal acetylome analyses and functional insights of the N-terminal acetyltransferase NatB.</title>
        <authorList>
            <person name="Van Damme P."/>
            <person name="Lasa M."/>
            <person name="Polevoda B."/>
            <person name="Gazquez C."/>
            <person name="Elosegui-Artola A."/>
            <person name="Kim D.S."/>
            <person name="De Juan-Pardo E."/>
            <person name="Demeyer K."/>
            <person name="Hole K."/>
            <person name="Larrea E."/>
            <person name="Timmerman E."/>
            <person name="Prieto J."/>
            <person name="Arnesen T."/>
            <person name="Sherman F."/>
            <person name="Gevaert K."/>
            <person name="Aldabe R."/>
        </authorList>
    </citation>
    <scope>ACETYLATION [LARGE SCALE ANALYSIS] AT ALA-2</scope>
    <scope>CLEAVAGE OF INITIATOR METHIONINE [LARGE SCALE ANALYSIS]</scope>
    <scope>IDENTIFICATION BY MASS SPECTROMETRY [LARGE SCALE ANALYSIS]</scope>
</reference>
<reference key="23">
    <citation type="journal article" date="2013" name="J. Proteome Res.">
        <title>Toward a comprehensive characterization of a human cancer cell phosphoproteome.</title>
        <authorList>
            <person name="Zhou H."/>
            <person name="Di Palma S."/>
            <person name="Preisinger C."/>
            <person name="Peng M."/>
            <person name="Polat A.N."/>
            <person name="Heck A.J."/>
            <person name="Mohammed S."/>
        </authorList>
    </citation>
    <scope>PHOSPHORYLATION [LARGE SCALE ANALYSIS] AT SER-1038; SER-1406; SER-1859; SER-1900 AND SER-1938</scope>
    <scope>IDENTIFICATION BY MASS SPECTROMETRY [LARGE SCALE ANALYSIS]</scope>
    <source>
        <tissue>Cervix carcinoma</tissue>
        <tissue>Erythroleukemia</tissue>
    </source>
</reference>
<reference key="24">
    <citation type="journal article" date="2013" name="Science">
        <title>Quantitative phosphoproteomics reveal mTORC1 activates de novo pyrimidine synthesis.</title>
        <authorList>
            <person name="Robitaille A.M."/>
            <person name="Christen S."/>
            <person name="Shimobayashi M."/>
            <person name="Cornu M."/>
            <person name="Fava L.L."/>
            <person name="Moes S."/>
            <person name="Prescianotto-Baschong C."/>
            <person name="Sauer U."/>
            <person name="Jenoe P."/>
            <person name="Hall M.N."/>
        </authorList>
    </citation>
    <scope>PHOSPHORYLATION AT SER-1859</scope>
</reference>
<reference key="25">
    <citation type="journal article" date="2013" name="Science">
        <title>Stimulation of de novo pyrimidine synthesis by growth signaling through mTOR and S6K1.</title>
        <authorList>
            <person name="Ben-Sahra I."/>
            <person name="Howell J.J."/>
            <person name="Asara J.M."/>
            <person name="Manning B.D."/>
        </authorList>
    </citation>
    <scope>PHOSPHORYLATION AT SER-1859 AND SER-1900</scope>
</reference>
<reference key="26">
    <citation type="journal article" date="2014" name="J. Proteomics">
        <title>An enzyme assisted RP-RPLC approach for in-depth analysis of human liver phosphoproteome.</title>
        <authorList>
            <person name="Bian Y."/>
            <person name="Song C."/>
            <person name="Cheng K."/>
            <person name="Dong M."/>
            <person name="Wang F."/>
            <person name="Huang J."/>
            <person name="Sun D."/>
            <person name="Wang L."/>
            <person name="Ye M."/>
            <person name="Zou H."/>
        </authorList>
    </citation>
    <scope>PHOSPHORYLATION [LARGE SCALE ANALYSIS] AT SER-1859</scope>
    <scope>IDENTIFICATION BY MASS SPECTROMETRY [LARGE SCALE ANALYSIS]</scope>
    <source>
        <tissue>Liver</tissue>
    </source>
</reference>
<reference key="27">
    <citation type="journal article" date="2016" name="Biochem. Biophys. Res. Commun.">
        <title>Versatile function of the circadian protein CIPC as a regulator of Erk activation.</title>
        <authorList>
            <person name="Matsunaga R."/>
            <person name="Nishino T."/>
            <person name="Yokoyama A."/>
            <person name="Nakashima A."/>
            <person name="Kikkawa U."/>
            <person name="Konishi H."/>
        </authorList>
    </citation>
    <scope>INTERACTION WITH CIPC</scope>
</reference>
<reference key="28">
    <citation type="journal article" date="2014" name="Structure">
        <title>Structure, functional characterization, and evolution of the dihydroorotase domain of human CAD.</title>
        <authorList>
            <person name="Grande-Garcia A."/>
            <person name="Lallous N."/>
            <person name="Diaz-Tejada C."/>
            <person name="Ramon-Maiques S."/>
        </authorList>
    </citation>
    <scope>X-RAY CRYSTALLOGRAPHY (1.35 ANGSTROMS) OF 1456-1846 IN COMPLEX WITH DIHYDROOROTATE; N-CARBAMOYL-L-ASPARTIC ACID AND ZINC</scope>
    <scope>COFACTOR</scope>
    <scope>CATALYTIC ACTIVITY</scope>
    <scope>FUNCTION</scope>
    <scope>BIOPHYSICOCHEMICAL PROPERTIES</scope>
    <scope>MUTAGENESIS OF HIS-1471; THR-1562; PHE-1563; HIS-1590; CYS-1613; HIS-1614; GLU-1637 AND ASP-1686</scope>
    <scope>CARBOXYLATION AT LYS-1556</scope>
</reference>
<reference evidence="28 29 30" key="29">
    <citation type="journal article" date="2016" name="Structure">
        <title>Structure and functional characterization of human aspartate transcarbamoylase, the target of the anti-tumoral drug PALA.</title>
        <authorList>
            <person name="Ruiz-Ramos A."/>
            <person name="Velazquez-Campoy A."/>
            <person name="Grande-Garcia A."/>
            <person name="Moreno-Morcillo M."/>
            <person name="Ramon-Maiques S."/>
        </authorList>
    </citation>
    <scope>X-RAY CRYSTALLOGRAPHY (2.10 ANGSTROMS) OF 1915-2225</scope>
</reference>
<reference evidence="31" key="30">
    <citation type="journal article" date="2018" name="Biochem. Biophys. Res. Commun.">
        <title>Crystal structures of monometallic dihydropyrimidinase and the human dihydroorotase domain K1556A mutant reveal no lysine carbamylation within the active site.</title>
        <authorList>
            <person name="Cheng J.H."/>
            <person name="Huang Y.H."/>
            <person name="Lin J.J."/>
            <person name="Huang C.Y."/>
        </authorList>
    </citation>
    <scope>X-RAY CRYSTALLOGRAPHY (2.77 ANGSTROMS) OF 1456-1846</scope>
</reference>
<reference key="31">
    <citation type="journal article" date="2018" name="J. Biol. Chem.">
        <title>Characterization of the catalytic flexible loop in the dihydroorotase domain of the human multi-enzymatic protein CAD.</title>
        <authorList>
            <person name="Del Cano-Ochoa F."/>
            <person name="Grande-Garcia A."/>
            <person name="Reverte-Lopez M."/>
            <person name="D'Abramo M."/>
            <person name="Ramon-Maiques S."/>
        </authorList>
    </citation>
    <scope>X-RAY CRYSTALLOGRAPHY (1.15 ANGSTROMS) OF 1456-1846</scope>
</reference>
<reference key="32">
    <citation type="journal article" date="2006" name="Science">
        <title>The consensus coding sequences of human breast and colorectal cancers.</title>
        <authorList>
            <person name="Sjoeblom T."/>
            <person name="Jones S."/>
            <person name="Wood L.D."/>
            <person name="Parsons D.W."/>
            <person name="Lin J."/>
            <person name="Barber T.D."/>
            <person name="Mandelker D."/>
            <person name="Leary R.J."/>
            <person name="Ptak J."/>
            <person name="Silliman N."/>
            <person name="Szabo S."/>
            <person name="Buckhaults P."/>
            <person name="Farrell C."/>
            <person name="Meeh P."/>
            <person name="Markowitz S.D."/>
            <person name="Willis J."/>
            <person name="Dawson D."/>
            <person name="Willson J.K.V."/>
            <person name="Gazdar A.F."/>
            <person name="Hartigan J."/>
            <person name="Wu L."/>
            <person name="Liu C."/>
            <person name="Parmigiani G."/>
            <person name="Park B.H."/>
            <person name="Bachman K.E."/>
            <person name="Papadopoulos N."/>
            <person name="Vogelstein B."/>
            <person name="Kinzler K.W."/>
            <person name="Velculescu V.E."/>
        </authorList>
    </citation>
    <scope>VARIANTS [LARGE SCALE ANALYSIS] GLN-177 AND CYS-735</scope>
</reference>
<reference key="33">
    <citation type="journal article" date="2015" name="Hum. Mol. Genet.">
        <title>Biallelic mutations in CAD, impair de novo pyrimidine biosynthesis and decrease glycosylation precursors.</title>
        <authorList>
            <person name="Ng B.G."/>
            <person name="Wolfe L.A."/>
            <person name="Ichikawa M."/>
            <person name="Markello T."/>
            <person name="He M."/>
            <person name="Tifft C.J."/>
            <person name="Gahl W.A."/>
            <person name="Freeze H.H."/>
        </authorList>
    </citation>
    <scope>INVOLVEMENT IN DEE50</scope>
    <scope>VARIANT DEE50 GLN-2024</scope>
</reference>
<reference key="34">
    <citation type="journal article" date="2017" name="Hum. Mol. Genet.">
        <title>Novel GNB1 mutations disrupt assembly and function of G protein heterotrimers and cause global developmental delay in humans.</title>
        <authorList>
            <person name="Lohmann K."/>
            <person name="Masuho I."/>
            <person name="Patil D.N."/>
            <person name="Baumann H."/>
            <person name="Hebert E."/>
            <person name="Steinruecke S."/>
            <person name="Trujillano D."/>
            <person name="Skamangas N.K."/>
            <person name="Dobricic V."/>
            <person name="Huening I."/>
            <person name="Gillessen-Kaesbach G."/>
            <person name="Westenberger A."/>
            <person name="Savic-Pavicevic D."/>
            <person name="Muenchau A."/>
            <person name="Oprea G."/>
            <person name="Klein C."/>
            <person name="Rolfs A."/>
            <person name="Martemyanov K.A."/>
        </authorList>
    </citation>
    <scope>VARIANTS DEE50 ARG-33 AND 1789-ARG--PHE-2225 DEL</scope>
</reference>
<keyword id="KW-0002">3D-structure</keyword>
<keyword id="KW-0007">Acetylation</keyword>
<keyword id="KW-0021">Allosteric enzyme</keyword>
<keyword id="KW-0067">ATP-binding</keyword>
<keyword id="KW-0900">Congenital disorder of glycosylation</keyword>
<keyword id="KW-0963">Cytoplasm</keyword>
<keyword id="KW-0903">Direct protein sequencing</keyword>
<keyword id="KW-0225">Disease variant</keyword>
<keyword id="KW-0887">Epilepsy</keyword>
<keyword id="KW-0378">Hydrolase</keyword>
<keyword id="KW-0436">Ligase</keyword>
<keyword id="KW-0460">Magnesium</keyword>
<keyword id="KW-0464">Manganese</keyword>
<keyword id="KW-0479">Metal-binding</keyword>
<keyword id="KW-0511">Multifunctional enzyme</keyword>
<keyword id="KW-0547">Nucleotide-binding</keyword>
<keyword id="KW-0539">Nucleus</keyword>
<keyword id="KW-0597">Phosphoprotein</keyword>
<keyword id="KW-1267">Proteomics identification</keyword>
<keyword id="KW-0665">Pyrimidine biosynthesis</keyword>
<keyword id="KW-1185">Reference proteome</keyword>
<keyword id="KW-0677">Repeat</keyword>
<keyword id="KW-0808">Transferase</keyword>
<keyword id="KW-0862">Zinc</keyword>
<protein>
    <recommendedName>
        <fullName evidence="24">Multifunctional protein CAD</fullName>
    </recommendedName>
    <alternativeName>
        <fullName>Carbamoyl phosphate synthetase 2-aspartate transcarbamylase-dihydroorotase</fullName>
    </alternativeName>
    <domain>
        <recommendedName>
            <fullName>Glutamine-dependent carbamoyl phosphate synthase</fullName>
            <ecNumber evidence="18">6.3.5.5</ecNumber>
        </recommendedName>
    </domain>
    <domain>
        <recommendedName>
            <fullName>Glutamine amidotransferase</fullName>
            <shortName>GATase</shortName>
            <shortName>GLNase</shortName>
            <ecNumber evidence="3">3.5.1.2</ecNumber>
        </recommendedName>
    </domain>
    <domain>
        <recommendedName>
            <fullName>Ammonium-dependent carbamoyl phosphate synthase</fullName>
            <shortName>CPS</shortName>
            <shortName>CPSase</shortName>
            <ecNumber evidence="3">6.3.4.16</ecNumber>
        </recommendedName>
    </domain>
    <domain>
        <recommendedName>
            <fullName>Aspartate carbamoyltransferase</fullName>
            <ecNumber evidence="18">2.1.3.2</ecNumber>
        </recommendedName>
    </domain>
    <domain>
        <recommendedName>
            <fullName>Dihydroorotase</fullName>
            <ecNumber evidence="18">3.5.2.3</ecNumber>
        </recommendedName>
    </domain>
</protein>